<feature type="initiator methionine" description="Removed" evidence="15 16 37 39 40 42">
    <location>
        <position position="1"/>
    </location>
</feature>
<feature type="chain" id="PRO_0000128346" description="T-complex protein 1 subunit epsilon">
    <location>
        <begin position="2"/>
        <end position="541"/>
    </location>
</feature>
<feature type="binding site" evidence="11 12 20 21 22 24 25 26 27">
    <location>
        <position position="53"/>
    </location>
    <ligand>
        <name>ADP</name>
        <dbReference type="ChEBI" id="CHEBI:456216"/>
    </ligand>
</feature>
<feature type="binding site" evidence="13 33">
    <location>
        <position position="53"/>
    </location>
    <ligand>
        <name>ATP</name>
        <dbReference type="ChEBI" id="CHEBI:30616"/>
    </ligand>
</feature>
<feature type="binding site" evidence="11 12 20 21 22 24 25 26 27">
    <location>
        <position position="104"/>
    </location>
    <ligand>
        <name>Mg(2+)</name>
        <dbReference type="ChEBI" id="CHEBI:18420"/>
    </ligand>
</feature>
<feature type="binding site" evidence="11 12 13 20 21 22 24 25 26 27 31 32">
    <location>
        <position position="105"/>
    </location>
    <ligand>
        <name>ADP</name>
        <dbReference type="ChEBI" id="CHEBI:456216"/>
    </ligand>
</feature>
<feature type="binding site" evidence="11 12 13 20 21 23 24 26 27 34">
    <location>
        <position position="106"/>
    </location>
    <ligand>
        <name>ADP</name>
        <dbReference type="ChEBI" id="CHEBI:456216"/>
    </ligand>
</feature>
<feature type="binding site" evidence="13 33">
    <location>
        <position position="106"/>
    </location>
    <ligand>
        <name>ATP</name>
        <dbReference type="ChEBI" id="CHEBI:30616"/>
    </ligand>
</feature>
<feature type="binding site" evidence="11 12 13 20 21 22 23 26 27 31 32 34">
    <location>
        <position position="107"/>
    </location>
    <ligand>
        <name>ADP</name>
        <dbReference type="ChEBI" id="CHEBI:456216"/>
    </ligand>
</feature>
<feature type="binding site" evidence="13 33">
    <location>
        <position position="107"/>
    </location>
    <ligand>
        <name>ATP</name>
        <dbReference type="ChEBI" id="CHEBI:30616"/>
    </ligand>
</feature>
<feature type="binding site" evidence="11 12 20 21 22 24 25 26 27">
    <location>
        <position position="175"/>
    </location>
    <ligand>
        <name>ADP</name>
        <dbReference type="ChEBI" id="CHEBI:456216"/>
    </ligand>
</feature>
<feature type="binding site" evidence="11 12 13 20 21 22 23 24 25 26 27 31 32 34">
    <location>
        <position position="422"/>
    </location>
    <ligand>
        <name>ADP</name>
        <dbReference type="ChEBI" id="CHEBI:456216"/>
    </ligand>
</feature>
<feature type="binding site" evidence="13 33">
    <location>
        <position position="422"/>
    </location>
    <ligand>
        <name>ATP</name>
        <dbReference type="ChEBI" id="CHEBI:30616"/>
    </ligand>
</feature>
<feature type="binding site" evidence="13 31 32">
    <location>
        <position position="492"/>
    </location>
    <ligand>
        <name>ADP</name>
        <dbReference type="ChEBI" id="CHEBI:456216"/>
    </ligand>
</feature>
<feature type="binding site" evidence="11 12 13 20 21 22 24 25 26 31 32 34">
    <location>
        <position position="508"/>
    </location>
    <ligand>
        <name>ADP</name>
        <dbReference type="ChEBI" id="CHEBI:456216"/>
    </ligand>
</feature>
<feature type="binding site" evidence="12 25">
    <location>
        <position position="513"/>
    </location>
    <ligand>
        <name>ADP</name>
        <dbReference type="ChEBI" id="CHEBI:456216"/>
    </ligand>
</feature>
<feature type="modified residue" description="N-acetylalanine" evidence="15 16 37 39 40 42">
    <location>
        <position position="2"/>
    </location>
</feature>
<feature type="modified residue" description="Phosphoserine" evidence="38">
    <location>
        <position position="26"/>
    </location>
</feature>
<feature type="modified residue" description="Phosphoserine" evidence="41">
    <location>
        <position position="346"/>
    </location>
</feature>
<feature type="modified residue" description="Phosphoserine" evidence="41">
    <location>
        <position position="539"/>
    </location>
</feature>
<feature type="cross-link" description="Glycyl lysine isopeptide (Lys-Gly) (interchain with G-Cter in SUMO2)" evidence="43">
    <location>
        <position position="20"/>
    </location>
</feature>
<feature type="cross-link" description="Glycyl lysine isopeptide (Lys-Gly) (interchain with G-Cter in SUMO2)" evidence="43">
    <location>
        <position position="210"/>
    </location>
</feature>
<feature type="cross-link" description="Glycyl lysine isopeptide (Lys-Gly) (interchain with G-Cter in SUMO2)" evidence="43">
    <location>
        <position position="214"/>
    </location>
</feature>
<feature type="cross-link" description="Glycyl lysine isopeptide (Lys-Gly) (interchain with G-Cter in SUMO2)" evidence="43">
    <location>
        <position position="265"/>
    </location>
</feature>
<feature type="cross-link" description="Glycyl lysine isopeptide (Lys-Gly) (interchain with G-Cter in SUMO2)" evidence="43">
    <location>
        <position position="275"/>
    </location>
</feature>
<feature type="cross-link" description="Glycyl lysine isopeptide (Lys-Gly) (interchain with G-Cter in SUMO2)" evidence="43">
    <location>
        <position position="279"/>
    </location>
</feature>
<feature type="cross-link" description="Glycyl lysine isopeptide (Lys-Gly) (interchain with G-Cter in SUMO2)" evidence="43">
    <location>
        <position position="392"/>
    </location>
</feature>
<feature type="splice variant" id="VSP_054005" description="In isoform 2." evidence="17">
    <location>
        <begin position="1"/>
        <end position="38"/>
    </location>
</feature>
<feature type="splice variant" id="VSP_054006" description="In isoform 2." evidence="17">
    <location>
        <begin position="56"/>
        <end position="110"/>
    </location>
</feature>
<feature type="sequence variant" id="VAR_052267" description="In dbSNP:rs11557652.">
    <original>E</original>
    <variation>V</variation>
    <location>
        <position position="146"/>
    </location>
</feature>
<feature type="sequence variant" id="VAR_030658" description="In HSNSP; dbSNP:rs118203986." evidence="4">
    <original>H</original>
    <variation>R</variation>
    <location>
        <position position="147"/>
    </location>
</feature>
<feature type="sequence variant" id="VAR_090331" description="Found in a patient with severe developmental delay, intellectual disability, pyramidal and cerebellar signs, visual impairment, polymicrogyria and pontocerebellar hypoplasia; uncertain significance; the orthologous yeast mutation induces yeast lethality suggesting loss of function." evidence="14">
    <original>K</original>
    <variation>R</variation>
    <location>
        <position position="176"/>
    </location>
</feature>
<feature type="sequence conflict" description="In Ref. 2; BAF83082." evidence="19" ref="2">
    <original>N</original>
    <variation>D</variation>
    <location>
        <position position="55"/>
    </location>
</feature>
<feature type="sequence conflict" description="In Ref. 2; BAF83082." evidence="19" ref="2">
    <original>G</original>
    <variation>D</variation>
    <location>
        <position position="512"/>
    </location>
</feature>
<feature type="strand" evidence="51">
    <location>
        <begin position="11"/>
        <end position="14"/>
    </location>
</feature>
<feature type="turn" evidence="44">
    <location>
        <begin position="20"/>
        <end position="24"/>
    </location>
</feature>
<feature type="strand" evidence="44">
    <location>
        <begin position="26"/>
        <end position="29"/>
    </location>
</feature>
<feature type="helix" evidence="44">
    <location>
        <begin position="31"/>
        <end position="48"/>
    </location>
</feature>
<feature type="helix" evidence="44">
    <location>
        <begin position="49"/>
        <end position="51"/>
    </location>
</feature>
<feature type="strand" evidence="44">
    <location>
        <begin position="58"/>
        <end position="62"/>
    </location>
</feature>
<feature type="strand" evidence="49">
    <location>
        <begin position="64"/>
        <end position="66"/>
    </location>
</feature>
<feature type="strand" evidence="44">
    <location>
        <begin position="68"/>
        <end position="71"/>
    </location>
</feature>
<feature type="helix" evidence="44">
    <location>
        <begin position="74"/>
        <end position="80"/>
    </location>
</feature>
<feature type="helix" evidence="44">
    <location>
        <begin position="86"/>
        <end position="101"/>
    </location>
</feature>
<feature type="helix" evidence="44">
    <location>
        <begin position="108"/>
        <end position="125"/>
    </location>
</feature>
<feature type="helix" evidence="44">
    <location>
        <begin position="130"/>
        <end position="151"/>
    </location>
</feature>
<feature type="turn" evidence="46">
    <location>
        <begin position="159"/>
        <end position="161"/>
    </location>
</feature>
<feature type="helix" evidence="44">
    <location>
        <begin position="163"/>
        <end position="173"/>
    </location>
</feature>
<feature type="helix" evidence="44">
    <location>
        <begin position="177"/>
        <end position="181"/>
    </location>
</feature>
<feature type="helix" evidence="44">
    <location>
        <begin position="182"/>
        <end position="195"/>
    </location>
</feature>
<feature type="turn" evidence="44">
    <location>
        <begin position="199"/>
        <end position="202"/>
    </location>
</feature>
<feature type="helix" evidence="44">
    <location>
        <begin position="206"/>
        <end position="208"/>
    </location>
</feature>
<feature type="strand" evidence="44">
    <location>
        <begin position="209"/>
        <end position="217"/>
    </location>
</feature>
<feature type="helix" evidence="44">
    <location>
        <begin position="219"/>
        <end position="221"/>
    </location>
</feature>
<feature type="strand" evidence="44">
    <location>
        <begin position="223"/>
        <end position="231"/>
    </location>
</feature>
<feature type="strand" evidence="52">
    <location>
        <begin position="234"/>
        <end position="236"/>
    </location>
</feature>
<feature type="strand" evidence="44">
    <location>
        <begin position="241"/>
        <end position="251"/>
    </location>
</feature>
<feature type="strand" evidence="47">
    <location>
        <begin position="255"/>
        <end position="257"/>
    </location>
</feature>
<feature type="strand" evidence="44">
    <location>
        <begin position="261"/>
        <end position="268"/>
    </location>
</feature>
<feature type="helix" evidence="44">
    <location>
        <begin position="271"/>
        <end position="294"/>
    </location>
</feature>
<feature type="strand" evidence="44">
    <location>
        <begin position="298"/>
        <end position="304"/>
    </location>
</feature>
<feature type="helix" evidence="44">
    <location>
        <begin position="308"/>
        <end position="316"/>
    </location>
</feature>
<feature type="strand" evidence="49">
    <location>
        <begin position="317"/>
        <end position="319"/>
    </location>
</feature>
<feature type="helix" evidence="44">
    <location>
        <begin position="327"/>
        <end position="337"/>
    </location>
</feature>
<feature type="strand" evidence="44">
    <location>
        <begin position="341"/>
        <end position="344"/>
    </location>
</feature>
<feature type="helix" evidence="44">
    <location>
        <begin position="345"/>
        <end position="347"/>
    </location>
</feature>
<feature type="strand" evidence="44">
    <location>
        <begin position="350"/>
        <end position="352"/>
    </location>
</feature>
<feature type="strand" evidence="44">
    <location>
        <begin position="354"/>
        <end position="363"/>
    </location>
</feature>
<feature type="strand" evidence="44">
    <location>
        <begin position="365"/>
        <end position="367"/>
    </location>
</feature>
<feature type="strand" evidence="44">
    <location>
        <begin position="370"/>
        <end position="375"/>
    </location>
</feature>
<feature type="strand" evidence="50">
    <location>
        <begin position="376"/>
        <end position="378"/>
    </location>
</feature>
<feature type="strand" evidence="44">
    <location>
        <begin position="383"/>
        <end position="391"/>
    </location>
</feature>
<feature type="helix" evidence="44">
    <location>
        <begin position="392"/>
        <end position="414"/>
    </location>
</feature>
<feature type="strand" evidence="44">
    <location>
        <begin position="417"/>
        <end position="420"/>
    </location>
</feature>
<feature type="turn" evidence="44">
    <location>
        <begin position="421"/>
        <end position="423"/>
    </location>
</feature>
<feature type="helix" evidence="44">
    <location>
        <begin position="424"/>
        <end position="439"/>
    </location>
</feature>
<feature type="helix" evidence="45">
    <location>
        <begin position="442"/>
        <end position="444"/>
    </location>
</feature>
<feature type="helix" evidence="44">
    <location>
        <begin position="445"/>
        <end position="455"/>
    </location>
</feature>
<feature type="helix" evidence="44">
    <location>
        <begin position="457"/>
        <end position="465"/>
    </location>
</feature>
<feature type="helix" evidence="44">
    <location>
        <begin position="470"/>
        <end position="483"/>
    </location>
</feature>
<feature type="helix" evidence="44">
    <location>
        <begin position="501"/>
        <end position="504"/>
    </location>
</feature>
<feature type="strand" evidence="44">
    <location>
        <begin position="507"/>
        <end position="509"/>
    </location>
</feature>
<feature type="helix" evidence="44">
    <location>
        <begin position="510"/>
        <end position="528"/>
    </location>
</feature>
<feature type="strand" evidence="44">
    <location>
        <begin position="530"/>
        <end position="535"/>
    </location>
</feature>
<feature type="strand" evidence="48">
    <location>
        <begin position="536"/>
        <end position="538"/>
    </location>
</feature>
<keyword id="KW-0002">3D-structure</keyword>
<keyword id="KW-0007">Acetylation</keyword>
<keyword id="KW-0025">Alternative splicing</keyword>
<keyword id="KW-0067">ATP-binding</keyword>
<keyword id="KW-0143">Chaperone</keyword>
<keyword id="KW-0963">Cytoplasm</keyword>
<keyword id="KW-0206">Cytoskeleton</keyword>
<keyword id="KW-0903">Direct protein sequencing</keyword>
<keyword id="KW-0225">Disease variant</keyword>
<keyword id="KW-0378">Hydrolase</keyword>
<keyword id="KW-1017">Isopeptide bond</keyword>
<keyword id="KW-0622">Neuropathy</keyword>
<keyword id="KW-0547">Nucleotide-binding</keyword>
<keyword id="KW-0597">Phosphoprotein</keyword>
<keyword id="KW-1267">Proteomics identification</keyword>
<keyword id="KW-1185">Reference proteome</keyword>
<keyword id="KW-0832">Ubl conjugation</keyword>
<accession>P48643</accession>
<accession>A8JZY8</accession>
<accession>A8K2X8</accession>
<accession>B4DYD8</accession>
<protein>
    <recommendedName>
        <fullName>T-complex protein 1 subunit epsilon</fullName>
        <shortName>TCP-1-epsilon</shortName>
        <ecNumber evidence="7">3.6.1.-</ecNumber>
    </recommendedName>
    <alternativeName>
        <fullName>CCT-epsilon</fullName>
    </alternativeName>
    <alternativeName>
        <fullName>Chaperonin containing T-complex polypeptide 1 subunit 5</fullName>
    </alternativeName>
</protein>
<gene>
    <name type="primary">CCT5</name>
    <name type="synonym">CCTE</name>
    <name evidence="18" type="synonym">KIAA0098</name>
</gene>
<comment type="function">
    <text evidence="6 8 11 12 13">Component of the chaperonin-containing T-complex (TRiC), a molecular chaperone complex that assists the folding of actin, tubulin and other proteins upon ATP hydrolysis (PubMed:25467444, PubMed:36493755, PubMed:35449234, PubMed:37193829). The TRiC complex mediates the folding of WRAP53/TCAB1, thereby regulating telomere maintenance (PubMed:25467444). As part of the TRiC complex may play a role in the assembly of BBSome, a complex involved in ciliogenesis regulating transports vesicles to the cilia (PubMed:20080638).</text>
</comment>
<comment type="catalytic activity">
    <reaction evidence="7">
        <text>ATP + H2O = ADP + phosphate + H(+)</text>
        <dbReference type="Rhea" id="RHEA:13065"/>
        <dbReference type="ChEBI" id="CHEBI:15377"/>
        <dbReference type="ChEBI" id="CHEBI:15378"/>
        <dbReference type="ChEBI" id="CHEBI:30616"/>
        <dbReference type="ChEBI" id="CHEBI:43474"/>
        <dbReference type="ChEBI" id="CHEBI:456216"/>
    </reaction>
</comment>
<comment type="subunit">
    <text evidence="1 2 6 8 10 11 12 13">Component of the chaperonin-containing T-complex (TRiC), a hexadecamer composed of two identical back-to-back stacked rings enclosing a protein folding chamber (PubMed:20080638, PubMed:25467444, PubMed:36493755, PubMed:35449234, PubMed:37193829). Each ring is made up of eight different subunits: TCP1/CCT1, CCT2, CCT3, CCT4, CCT5, CCT6A/CCT6, CCT7, CCT8 (PubMed:36493755, PubMed:35449234, PubMed:37193829). Interacts with PACRG (PubMed:14532270). Interacts with DNAAF4 (By similarity). Interacts with DLEC1 (PubMed:33144677). Interacts with SPMAP2 (By similarity).</text>
</comment>
<comment type="interaction">
    <interactant intactId="EBI-355710">
        <id>P48643</id>
    </interactant>
    <interactant intactId="EBI-2875816">
        <id>Q9NP61</id>
        <label>ARFGAP3</label>
    </interactant>
    <organismsDiffer>false</organismsDiffer>
    <experiments>3</experiments>
</comment>
<comment type="interaction">
    <interactant intactId="EBI-355710">
        <id>P48643</id>
    </interactant>
    <interactant intactId="EBI-930964">
        <id>P54253</id>
        <label>ATXN1</label>
    </interactant>
    <organismsDiffer>false</organismsDiffer>
    <experiments>3</experiments>
</comment>
<comment type="interaction">
    <interactant intactId="EBI-355710">
        <id>P48643</id>
    </interactant>
    <interactant intactId="EBI-747185">
        <id>O95817</id>
        <label>BAG3</label>
    </interactant>
    <organismsDiffer>false</organismsDiffer>
    <experiments>3</experiments>
</comment>
<comment type="interaction">
    <interactant intactId="EBI-355710">
        <id>P48643</id>
    </interactant>
    <interactant intactId="EBI-949378">
        <id>Q14457</id>
        <label>BECN1</label>
    </interactant>
    <organismsDiffer>false</organismsDiffer>
    <experiments>3</experiments>
</comment>
<comment type="interaction">
    <interactant intactId="EBI-355710">
        <id>P48643</id>
    </interactant>
    <interactant intactId="EBI-357407">
        <id>P78371</id>
        <label>CCT2</label>
    </interactant>
    <organismsDiffer>false</organismsDiffer>
    <experiments>7</experiments>
</comment>
<comment type="interaction">
    <interactant intactId="EBI-355710">
        <id>P48643</id>
    </interactant>
    <interactant intactId="EBI-350590">
        <id>Q9UNS2</id>
        <label>COPS3</label>
    </interactant>
    <organismsDiffer>false</organismsDiffer>
    <experiments>3</experiments>
</comment>
<comment type="interaction">
    <interactant intactId="EBI-355710">
        <id>P48643</id>
    </interactant>
    <interactant intactId="EBI-2510162">
        <id>Q9H9Q2</id>
        <label>COPS7B</label>
    </interactant>
    <organismsDiffer>false</organismsDiffer>
    <experiments>3</experiments>
</comment>
<comment type="interaction">
    <interactant intactId="EBI-355710">
        <id>P48643</id>
    </interactant>
    <interactant intactId="EBI-10213520">
        <id>Q6NXG1</id>
        <label>ESRP1</label>
    </interactant>
    <organismsDiffer>false</organismsDiffer>
    <experiments>3</experiments>
</comment>
<comment type="interaction">
    <interactant intactId="EBI-355710">
        <id>P48643</id>
    </interactant>
    <interactant intactId="EBI-724253">
        <id>Q9UKC9</id>
        <label>FBXL2</label>
    </interactant>
    <organismsDiffer>false</organismsDiffer>
    <experiments>3</experiments>
</comment>
<comment type="interaction">
    <interactant intactId="EBI-355710">
        <id>P48643</id>
    </interactant>
    <interactant intactId="EBI-8799578">
        <id>Q9NXC2</id>
        <label>GFOD1</label>
    </interactant>
    <organismsDiffer>false</organismsDiffer>
    <experiments>3</experiments>
</comment>
<comment type="interaction">
    <interactant intactId="EBI-355710">
        <id>P48643</id>
    </interactant>
    <interactant intactId="EBI-6447217">
        <id>O75409</id>
        <label>H2AP</label>
    </interactant>
    <organismsDiffer>false</organismsDiffer>
    <experiments>3</experiments>
</comment>
<comment type="interaction">
    <interactant intactId="EBI-355710">
        <id>P48643</id>
    </interactant>
    <interactant intactId="EBI-2965780">
        <id>P52790</id>
        <label>HK3</label>
    </interactant>
    <organismsDiffer>false</organismsDiffer>
    <experiments>3</experiments>
</comment>
<comment type="interaction">
    <interactant intactId="EBI-355710">
        <id>P48643</id>
    </interactant>
    <interactant intactId="EBI-740785">
        <id>P49639</id>
        <label>HOXA1</label>
    </interactant>
    <organismsDiffer>false</organismsDiffer>
    <experiments>3</experiments>
</comment>
<comment type="interaction">
    <interactant intactId="EBI-355710">
        <id>P48643</id>
    </interactant>
    <interactant intactId="EBI-466029">
        <id>P42858</id>
        <label>HTT</label>
    </interactant>
    <organismsDiffer>false</organismsDiffer>
    <experiments>3</experiments>
</comment>
<comment type="interaction">
    <interactant intactId="EBI-355710">
        <id>P48643</id>
    </interactant>
    <interactant intactId="EBI-1049638">
        <id>Q14525</id>
        <label>KRT33B</label>
    </interactant>
    <organismsDiffer>false</organismsDiffer>
    <experiments>3</experiments>
</comment>
<comment type="interaction">
    <interactant intactId="EBI-355710">
        <id>P48643</id>
    </interactant>
    <interactant intactId="EBI-8474075">
        <id>Q68G74</id>
        <label>LHX8</label>
    </interactant>
    <organismsDiffer>false</organismsDiffer>
    <experiments>3</experiments>
</comment>
<comment type="interaction">
    <interactant intactId="EBI-355710">
        <id>P48643</id>
    </interactant>
    <interactant intactId="EBI-9088215">
        <id>A2RU56</id>
        <label>LOC401296</label>
    </interactant>
    <organismsDiffer>false</organismsDiffer>
    <experiments>3</experiments>
</comment>
<comment type="interaction">
    <interactant intactId="EBI-355710">
        <id>P48643</id>
    </interactant>
    <interactant intactId="EBI-2510853">
        <id>Q1L5Z9</id>
        <label>LONRF2</label>
    </interactant>
    <organismsDiffer>false</organismsDiffer>
    <experiments>3</experiments>
</comment>
<comment type="interaction">
    <interactant intactId="EBI-355710">
        <id>P48643</id>
    </interactant>
    <interactant intactId="EBI-25840002">
        <id>O15130-2</id>
        <label>NPFF</label>
    </interactant>
    <organismsDiffer>false</organismsDiffer>
    <experiments>3</experiments>
</comment>
<comment type="interaction">
    <interactant intactId="EBI-355710">
        <id>P48643</id>
    </interactant>
    <interactant intactId="EBI-12339509">
        <id>Q96LB9</id>
        <label>PGLYRP3</label>
    </interactant>
    <organismsDiffer>false</organismsDiffer>
    <experiments>3</experiments>
</comment>
<comment type="interaction">
    <interactant intactId="EBI-355710">
        <id>P48643</id>
    </interactant>
    <interactant intactId="EBI-629434">
        <id>O75925</id>
        <label>PIAS1</label>
    </interactant>
    <organismsDiffer>false</organismsDiffer>
    <experiments>3</experiments>
</comment>
<comment type="interaction">
    <interactant intactId="EBI-355710">
        <id>P48643</id>
    </interactant>
    <interactant intactId="EBI-12891828">
        <id>Q6ZR37</id>
        <label>PLEKHG7</label>
    </interactant>
    <organismsDiffer>false</organismsDiffer>
    <experiments>3</experiments>
</comment>
<comment type="interaction">
    <interactant intactId="EBI-355710">
        <id>P48643</id>
    </interactant>
    <interactant intactId="EBI-25866807">
        <id>Q9H0F5-2</id>
        <label>RNF38</label>
    </interactant>
    <organismsDiffer>false</organismsDiffer>
    <experiments>3</experiments>
</comment>
<comment type="interaction">
    <interactant intactId="EBI-355710">
        <id>P48643</id>
    </interactant>
    <interactant intactId="EBI-9089805">
        <id>Q9NTN9-3</id>
        <label>SEMA4G</label>
    </interactant>
    <organismsDiffer>false</organismsDiffer>
    <experiments>3</experiments>
</comment>
<comment type="interaction">
    <interactant intactId="EBI-355710">
        <id>P48643</id>
    </interactant>
    <interactant intactId="EBI-9092164">
        <id>O60902-3</id>
        <label>SHOX2</label>
    </interactant>
    <organismsDiffer>false</organismsDiffer>
    <experiments>3</experiments>
</comment>
<comment type="interaction">
    <interactant intactId="EBI-355710">
        <id>P48643</id>
    </interactant>
    <interactant intactId="EBI-11959123">
        <id>Q99932-2</id>
        <label>SPAG8</label>
    </interactant>
    <organismsDiffer>false</organismsDiffer>
    <experiments>3</experiments>
</comment>
<comment type="interaction">
    <interactant intactId="EBI-355710">
        <id>P48643</id>
    </interactant>
    <interactant intactId="EBI-373258">
        <id>O75886</id>
        <label>STAM2</label>
    </interactant>
    <organismsDiffer>false</organismsDiffer>
    <experiments>3</experiments>
</comment>
<comment type="interaction">
    <interactant intactId="EBI-355710">
        <id>P48643</id>
    </interactant>
    <interactant intactId="EBI-396676">
        <id>O95630</id>
        <label>STAMBP</label>
    </interactant>
    <organismsDiffer>false</organismsDiffer>
    <experiments>3</experiments>
</comment>
<comment type="interaction">
    <interactant intactId="EBI-355710">
        <id>P48643</id>
    </interactant>
    <interactant intactId="EBI-22013242">
        <id>A1L378</id>
        <label>STRC</label>
    </interactant>
    <organismsDiffer>false</organismsDiffer>
    <experiments>3</experiments>
</comment>
<comment type="interaction">
    <interactant intactId="EBI-355710">
        <id>P48643</id>
    </interactant>
    <interactant intactId="EBI-1049822">
        <id>O60220</id>
        <label>TIMM8A</label>
    </interactant>
    <organismsDiffer>false</organismsDiffer>
    <experiments>3</experiments>
</comment>
<comment type="interaction">
    <interactant intactId="EBI-355710">
        <id>P48643</id>
    </interactant>
    <interactant intactId="EBI-366083">
        <id>P04637</id>
        <label>TP53</label>
    </interactant>
    <organismsDiffer>false</organismsDiffer>
    <experiments>3</experiments>
</comment>
<comment type="interaction">
    <interactant intactId="EBI-355710">
        <id>P48643</id>
    </interactant>
    <interactant intactId="EBI-10964469">
        <id>Q9UGJ1-2</id>
        <label>TUBGCP4</label>
    </interactant>
    <organismsDiffer>false</organismsDiffer>
    <experiments>3</experiments>
</comment>
<comment type="interaction">
    <interactant intactId="EBI-355710">
        <id>P48643</id>
    </interactant>
    <interactant intactId="EBI-716589">
        <id>Q96B02</id>
        <label>UBE2W</label>
    </interactant>
    <organismsDiffer>false</organismsDiffer>
    <experiments>3</experiments>
</comment>
<comment type="interaction">
    <interactant intactId="EBI-355710">
        <id>P48643</id>
    </interactant>
    <interactant intactId="EBI-354022">
        <id>P45880</id>
        <label>VDAC2</label>
    </interactant>
    <organismsDiffer>false</organismsDiffer>
    <experiments>3</experiments>
</comment>
<comment type="interaction">
    <interactant intactId="EBI-355710">
        <id>P48643</id>
    </interactant>
    <interactant intactId="EBI-743923">
        <id>O00308</id>
        <label>WWP2</label>
    </interactant>
    <organismsDiffer>false</organismsDiffer>
    <experiments>6</experiments>
</comment>
<comment type="interaction">
    <interactant intactId="EBI-355710">
        <id>P48643</id>
    </interactant>
    <interactant intactId="EBI-12939666">
        <id>Q96N77-2</id>
        <label>ZNF641</label>
    </interactant>
    <organismsDiffer>false</organismsDiffer>
    <experiments>3</experiments>
</comment>
<comment type="interaction">
    <interactant intactId="EBI-355710">
        <id>P48643</id>
    </interactant>
    <interactant intactId="EBI-741415">
        <id>O60232</id>
        <label>ZNRD2</label>
    </interactant>
    <organismsDiffer>false</organismsDiffer>
    <experiments>5</experiments>
</comment>
<comment type="subcellular location">
    <subcellularLocation>
        <location evidence="6">Cytoplasm</location>
    </subcellularLocation>
    <subcellularLocation>
        <location evidence="3 6">Cytoplasm</location>
        <location evidence="3 6">Cytoskeleton</location>
        <location evidence="3 6">Microtubule organizing center</location>
        <location evidence="3 6">Centrosome</location>
    </subcellularLocation>
</comment>
<comment type="alternative products">
    <event type="alternative splicing"/>
    <isoform>
        <id>P48643-1</id>
        <name>1</name>
        <sequence type="displayed"/>
    </isoform>
    <isoform>
        <id>P48643-2</id>
        <name>2</name>
        <sequence type="described" ref="VSP_054005 VSP_054006"/>
    </isoform>
</comment>
<comment type="induction">
    <text evidence="5">Down-regulated in response to enterovirus 71 (EV71) infection (at protein level).</text>
</comment>
<comment type="PTM">
    <text evidence="9">Ubiquitinated by the DCX(DCAF12) complex specifically recognizes the diglutamate (Glu-Glu) at the C-terminus, leading to its degradation.</text>
</comment>
<comment type="disease" evidence="4">
    <disease id="DI-01256">
        <name>Neuropathy, hereditary sensory, with spastic paraplegia, autosomal recessive</name>
        <acronym>HSNSP</acronym>
        <description>A disease characterized by spastic paraplegia and progressive distal sensory neuropathy leading to mutilating ulcerations of the upper and lower limbs.</description>
        <dbReference type="MIM" id="256840"/>
    </disease>
    <text>The disease is caused by variants affecting the gene represented in this entry.</text>
</comment>
<comment type="disease">
    <text evidence="14">De novo genetic variants in nearly every subunit of the TRiC complex, including CCT5, have been found in individuals with a broad spectrum of brain malformations, and clinical phenotypes ranging from mild to severe epilepsy, developmental delay, intellectual disability, ataxia, and other features of cerebral malfunction.</text>
</comment>
<comment type="similarity">
    <text evidence="19">Belongs to the TCP-1 chaperonin family.</text>
</comment>
<comment type="sequence caution" evidence="19">
    <conflict type="erroneous initiation">
        <sequence resource="EMBL-CDS" id="BAA07894"/>
    </conflict>
</comment>
<dbReference type="EC" id="3.6.1.-" evidence="7"/>
<dbReference type="EMBL" id="D43950">
    <property type="protein sequence ID" value="BAA07894.2"/>
    <property type="status" value="ALT_INIT"/>
    <property type="molecule type" value="mRNA"/>
</dbReference>
<dbReference type="EMBL" id="AK289353">
    <property type="protein sequence ID" value="BAF82042.1"/>
    <property type="molecule type" value="mRNA"/>
</dbReference>
<dbReference type="EMBL" id="AK290393">
    <property type="protein sequence ID" value="BAF83082.1"/>
    <property type="molecule type" value="mRNA"/>
</dbReference>
<dbReference type="EMBL" id="AK302383">
    <property type="protein sequence ID" value="BAG63700.1"/>
    <property type="molecule type" value="mRNA"/>
</dbReference>
<dbReference type="EMBL" id="AC012640">
    <property type="status" value="NOT_ANNOTATED_CDS"/>
    <property type="molecule type" value="Genomic_DNA"/>
</dbReference>
<dbReference type="EMBL" id="CH471102">
    <property type="protein sequence ID" value="EAX08072.1"/>
    <property type="molecule type" value="Genomic_DNA"/>
</dbReference>
<dbReference type="EMBL" id="BC006543">
    <property type="protein sequence ID" value="AAH06543.1"/>
    <property type="molecule type" value="mRNA"/>
</dbReference>
<dbReference type="EMBL" id="BC035499">
    <property type="protein sequence ID" value="AAH35499.1"/>
    <property type="molecule type" value="mRNA"/>
</dbReference>
<dbReference type="CCDS" id="CCDS3877.1">
    <molecule id="P48643-1"/>
</dbReference>
<dbReference type="CCDS" id="CCDS82990.1">
    <molecule id="P48643-2"/>
</dbReference>
<dbReference type="RefSeq" id="NP_001293084.1">
    <molecule id="P48643-2"/>
    <property type="nucleotide sequence ID" value="NM_001306155.2"/>
</dbReference>
<dbReference type="RefSeq" id="NP_036205.1">
    <molecule id="P48643-1"/>
    <property type="nucleotide sequence ID" value="NM_012073.5"/>
</dbReference>
<dbReference type="PDB" id="5UYX">
    <property type="method" value="X-ray"/>
    <property type="resolution" value="3.50 A"/>
    <property type="chains" value="A/B/C/D=1-541"/>
</dbReference>
<dbReference type="PDB" id="5UYZ">
    <property type="method" value="X-ray"/>
    <property type="resolution" value="3.60 A"/>
    <property type="chains" value="A/B/C/D=1-541"/>
</dbReference>
<dbReference type="PDB" id="6NR8">
    <property type="method" value="EM"/>
    <property type="resolution" value="7.80 A"/>
    <property type="chains" value="E/M=25-541"/>
</dbReference>
<dbReference type="PDB" id="6NR9">
    <property type="method" value="EM"/>
    <property type="resolution" value="8.50 A"/>
    <property type="chains" value="E/M=25-541"/>
</dbReference>
<dbReference type="PDB" id="6NRA">
    <property type="method" value="EM"/>
    <property type="resolution" value="7.70 A"/>
    <property type="chains" value="E/M=25-541"/>
</dbReference>
<dbReference type="PDB" id="6NRB">
    <property type="method" value="EM"/>
    <property type="resolution" value="8.70 A"/>
    <property type="chains" value="E/M=25-541"/>
</dbReference>
<dbReference type="PDB" id="6NRC">
    <property type="method" value="EM"/>
    <property type="resolution" value="8.30 A"/>
    <property type="chains" value="E/M=25-541"/>
</dbReference>
<dbReference type="PDB" id="6NRD">
    <property type="method" value="EM"/>
    <property type="resolution" value="8.20 A"/>
    <property type="chains" value="E/M=25-541"/>
</dbReference>
<dbReference type="PDB" id="6QB8">
    <property type="method" value="EM"/>
    <property type="resolution" value="3.97 A"/>
    <property type="chains" value="E/e=1-541"/>
</dbReference>
<dbReference type="PDB" id="7LUM">
    <property type="method" value="EM"/>
    <property type="resolution" value="4.50 A"/>
    <property type="chains" value="D/L=1-541"/>
</dbReference>
<dbReference type="PDB" id="7LUP">
    <property type="method" value="EM"/>
    <property type="resolution" value="6.20 A"/>
    <property type="chains" value="D/L=1-541"/>
</dbReference>
<dbReference type="PDB" id="7NVL">
    <property type="method" value="EM"/>
    <property type="resolution" value="2.50 A"/>
    <property type="chains" value="E/e=1-541"/>
</dbReference>
<dbReference type="PDB" id="7NVM">
    <property type="method" value="EM"/>
    <property type="resolution" value="3.10 A"/>
    <property type="chains" value="E/e=1-541"/>
</dbReference>
<dbReference type="PDB" id="7NVN">
    <property type="method" value="EM"/>
    <property type="resolution" value="3.00 A"/>
    <property type="chains" value="E/e=1-541"/>
</dbReference>
<dbReference type="PDB" id="7NVO">
    <property type="method" value="EM"/>
    <property type="resolution" value="3.50 A"/>
    <property type="chains" value="E/e=1-541"/>
</dbReference>
<dbReference type="PDB" id="7TRG">
    <property type="method" value="EM"/>
    <property type="resolution" value="3.00 A"/>
    <property type="chains" value="D=1-541"/>
</dbReference>
<dbReference type="PDB" id="7TTN">
    <property type="method" value="EM"/>
    <property type="resolution" value="3.30 A"/>
    <property type="chains" value="D=1-541"/>
</dbReference>
<dbReference type="PDB" id="7TTT">
    <property type="method" value="EM"/>
    <property type="resolution" value="2.90 A"/>
    <property type="chains" value="D=1-541"/>
</dbReference>
<dbReference type="PDB" id="7TUB">
    <property type="method" value="EM"/>
    <property type="resolution" value="3.60 A"/>
    <property type="chains" value="D=1-541"/>
</dbReference>
<dbReference type="PDB" id="7WU7">
    <property type="method" value="EM"/>
    <property type="resolution" value="3.85 A"/>
    <property type="chains" value="E/M=1-541"/>
</dbReference>
<dbReference type="PDB" id="7WZ3">
    <property type="method" value="EM"/>
    <property type="resolution" value="4.10 A"/>
    <property type="chains" value="E/e=3-541"/>
</dbReference>
<dbReference type="PDB" id="7X0A">
    <property type="method" value="EM"/>
    <property type="resolution" value="3.10 A"/>
    <property type="chains" value="E/e=3-541"/>
</dbReference>
<dbReference type="PDB" id="7X0S">
    <property type="method" value="EM"/>
    <property type="resolution" value="3.10 A"/>
    <property type="chains" value="E/e=3-541"/>
</dbReference>
<dbReference type="PDB" id="7X0V">
    <property type="method" value="EM"/>
    <property type="resolution" value="3.20 A"/>
    <property type="chains" value="E/e=3-541"/>
</dbReference>
<dbReference type="PDB" id="7X3J">
    <property type="method" value="EM"/>
    <property type="resolution" value="4.20 A"/>
    <property type="chains" value="E/e=3-541"/>
</dbReference>
<dbReference type="PDB" id="7X3U">
    <property type="method" value="EM"/>
    <property type="resolution" value="3.30 A"/>
    <property type="chains" value="E/e=3-541"/>
</dbReference>
<dbReference type="PDB" id="7X6Q">
    <property type="method" value="EM"/>
    <property type="resolution" value="4.50 A"/>
    <property type="chains" value="E/e=3-541"/>
</dbReference>
<dbReference type="PDB" id="7X7Y">
    <property type="method" value="EM"/>
    <property type="resolution" value="3.80 A"/>
    <property type="chains" value="E/e=3-541"/>
</dbReference>
<dbReference type="PDB" id="8AJM">
    <property type="method" value="EM"/>
    <property type="resolution" value="2.83 A"/>
    <property type="chains" value="C=1-541"/>
</dbReference>
<dbReference type="PDB" id="8AJO">
    <property type="method" value="EM"/>
    <property type="resolution" value="30.60 A"/>
    <property type="chains" value="C=1-541"/>
</dbReference>
<dbReference type="PDB" id="8HKI">
    <property type="method" value="EM"/>
    <property type="resolution" value="3.10 A"/>
    <property type="chains" value="E/e=3-541"/>
</dbReference>
<dbReference type="PDB" id="8I1U">
    <property type="method" value="EM"/>
    <property type="resolution" value="3.24 A"/>
    <property type="chains" value="E/M=1-541"/>
</dbReference>
<dbReference type="PDB" id="8I9U">
    <property type="method" value="EM"/>
    <property type="resolution" value="3.10 A"/>
    <property type="chains" value="E/M=1-541"/>
</dbReference>
<dbReference type="PDB" id="8IB8">
    <property type="method" value="EM"/>
    <property type="resolution" value="4.42 A"/>
    <property type="chains" value="E/M=1-541"/>
</dbReference>
<dbReference type="PDB" id="8SFE">
    <property type="method" value="EM"/>
    <property type="resolution" value="3.36 A"/>
    <property type="chains" value="E/e=2-541"/>
</dbReference>
<dbReference type="PDB" id="8SFF">
    <property type="method" value="EM"/>
    <property type="resolution" value="3.20 A"/>
    <property type="chains" value="E/e=2-541"/>
</dbReference>
<dbReference type="PDB" id="8SG8">
    <property type="method" value="EM"/>
    <property type="resolution" value="3.00 A"/>
    <property type="chains" value="E/e=2-541"/>
</dbReference>
<dbReference type="PDB" id="8SG9">
    <property type="method" value="EM"/>
    <property type="resolution" value="2.90 A"/>
    <property type="chains" value="E/e=2-541"/>
</dbReference>
<dbReference type="PDB" id="8SGC">
    <property type="method" value="EM"/>
    <property type="resolution" value="2.90 A"/>
    <property type="chains" value="E/e=2-541"/>
</dbReference>
<dbReference type="PDB" id="8SGL">
    <property type="method" value="EM"/>
    <property type="resolution" value="2.90 A"/>
    <property type="chains" value="E/e=2-541"/>
</dbReference>
<dbReference type="PDB" id="8SGQ">
    <property type="method" value="EM"/>
    <property type="resolution" value="3.70 A"/>
    <property type="chains" value="E/e=2-541"/>
</dbReference>
<dbReference type="PDB" id="8SH9">
    <property type="method" value="EM"/>
    <property type="resolution" value="2.70 A"/>
    <property type="chains" value="E/e=2-541"/>
</dbReference>
<dbReference type="PDB" id="8SHA">
    <property type="method" value="EM"/>
    <property type="resolution" value="3.00 A"/>
    <property type="chains" value="E/e=2-541"/>
</dbReference>
<dbReference type="PDB" id="8SHD">
    <property type="method" value="EM"/>
    <property type="resolution" value="2.90 A"/>
    <property type="chains" value="E/e=2-541"/>
</dbReference>
<dbReference type="PDB" id="8SHE">
    <property type="method" value="EM"/>
    <property type="resolution" value="2.80 A"/>
    <property type="chains" value="E/e=2-541"/>
</dbReference>
<dbReference type="PDB" id="8SHF">
    <property type="method" value="EM"/>
    <property type="resolution" value="3.00 A"/>
    <property type="chains" value="E/e=2-541"/>
</dbReference>
<dbReference type="PDB" id="8SHG">
    <property type="method" value="EM"/>
    <property type="resolution" value="2.80 A"/>
    <property type="chains" value="E/e=2-541"/>
</dbReference>
<dbReference type="PDB" id="8SHL">
    <property type="method" value="EM"/>
    <property type="resolution" value="3.00 A"/>
    <property type="chains" value="E/e=2-541"/>
</dbReference>
<dbReference type="PDB" id="8SHN">
    <property type="method" value="EM"/>
    <property type="resolution" value="2.80 A"/>
    <property type="chains" value="E/e=2-541"/>
</dbReference>
<dbReference type="PDB" id="8SHO">
    <property type="method" value="EM"/>
    <property type="resolution" value="3.00 A"/>
    <property type="chains" value="E/e=2-541"/>
</dbReference>
<dbReference type="PDB" id="8SHP">
    <property type="method" value="EM"/>
    <property type="resolution" value="3.00 A"/>
    <property type="chains" value="E/e=2-541"/>
</dbReference>
<dbReference type="PDB" id="8SHQ">
    <property type="method" value="EM"/>
    <property type="resolution" value="2.90 A"/>
    <property type="chains" value="E/e=2-541"/>
</dbReference>
<dbReference type="PDB" id="8SHT">
    <property type="method" value="EM"/>
    <property type="resolution" value="3.00 A"/>
    <property type="chains" value="E/e=2-541"/>
</dbReference>
<dbReference type="PDBsum" id="5UYX"/>
<dbReference type="PDBsum" id="5UYZ"/>
<dbReference type="PDBsum" id="6NR8"/>
<dbReference type="PDBsum" id="6NR9"/>
<dbReference type="PDBsum" id="6NRA"/>
<dbReference type="PDBsum" id="6NRB"/>
<dbReference type="PDBsum" id="6NRC"/>
<dbReference type="PDBsum" id="6NRD"/>
<dbReference type="PDBsum" id="6QB8"/>
<dbReference type="PDBsum" id="7LUM"/>
<dbReference type="PDBsum" id="7LUP"/>
<dbReference type="PDBsum" id="7NVL"/>
<dbReference type="PDBsum" id="7NVM"/>
<dbReference type="PDBsum" id="7NVN"/>
<dbReference type="PDBsum" id="7NVO"/>
<dbReference type="PDBsum" id="7TRG"/>
<dbReference type="PDBsum" id="7TTN"/>
<dbReference type="PDBsum" id="7TTT"/>
<dbReference type="PDBsum" id="7TUB"/>
<dbReference type="PDBsum" id="7WU7"/>
<dbReference type="PDBsum" id="7WZ3"/>
<dbReference type="PDBsum" id="7X0A"/>
<dbReference type="PDBsum" id="7X0S"/>
<dbReference type="PDBsum" id="7X0V"/>
<dbReference type="PDBsum" id="7X3J"/>
<dbReference type="PDBsum" id="7X3U"/>
<dbReference type="PDBsum" id="7X6Q"/>
<dbReference type="PDBsum" id="7X7Y"/>
<dbReference type="PDBsum" id="8AJM"/>
<dbReference type="PDBsum" id="8AJO"/>
<dbReference type="PDBsum" id="8HKI"/>
<dbReference type="PDBsum" id="8I1U"/>
<dbReference type="PDBsum" id="8I9U"/>
<dbReference type="PDBsum" id="8IB8"/>
<dbReference type="PDBsum" id="8SFE"/>
<dbReference type="PDBsum" id="8SFF"/>
<dbReference type="PDBsum" id="8SG8"/>
<dbReference type="PDBsum" id="8SG9"/>
<dbReference type="PDBsum" id="8SGC"/>
<dbReference type="PDBsum" id="8SGL"/>
<dbReference type="PDBsum" id="8SGQ"/>
<dbReference type="PDBsum" id="8SH9"/>
<dbReference type="PDBsum" id="8SHA"/>
<dbReference type="PDBsum" id="8SHD"/>
<dbReference type="PDBsum" id="8SHE"/>
<dbReference type="PDBsum" id="8SHF"/>
<dbReference type="PDBsum" id="8SHG"/>
<dbReference type="PDBsum" id="8SHL"/>
<dbReference type="PDBsum" id="8SHN"/>
<dbReference type="PDBsum" id="8SHO"/>
<dbReference type="PDBsum" id="8SHP"/>
<dbReference type="PDBsum" id="8SHQ"/>
<dbReference type="PDBsum" id="8SHT"/>
<dbReference type="EMDB" id="EMD-0490"/>
<dbReference type="EMDB" id="EMD-0491"/>
<dbReference type="EMDB" id="EMD-0492"/>
<dbReference type="EMDB" id="EMD-0493"/>
<dbReference type="EMDB" id="EMD-0494"/>
<dbReference type="EMDB" id="EMD-0495"/>
<dbReference type="EMDB" id="EMD-12605"/>
<dbReference type="EMDB" id="EMD-12606"/>
<dbReference type="EMDB" id="EMD-12607"/>
<dbReference type="EMDB" id="EMD-12608"/>
<dbReference type="EMDB" id="EMD-13754"/>
<dbReference type="EMDB" id="EMD-15484"/>
<dbReference type="EMDB" id="EMD-15486"/>
<dbReference type="EMDB" id="EMD-23522"/>
<dbReference type="EMDB" id="EMD-23526"/>
<dbReference type="EMDB" id="EMD-26089"/>
<dbReference type="EMDB" id="EMD-26120"/>
<dbReference type="EMDB" id="EMD-26123"/>
<dbReference type="EMDB" id="EMD-26131"/>
<dbReference type="EMDB" id="EMD-2947"/>
<dbReference type="EMDB" id="EMD-2962"/>
<dbReference type="EMDB" id="EMD-2963"/>
<dbReference type="EMDB" id="EMD-32823"/>
<dbReference type="EMDB" id="EMD-32903"/>
<dbReference type="EMDB" id="EMD-32922"/>
<dbReference type="EMDB" id="EMD-32923"/>
<dbReference type="EMDB" id="EMD-32926"/>
<dbReference type="EMDB" id="EMD-32989"/>
<dbReference type="EMDB" id="EMD-32993"/>
<dbReference type="EMDB" id="EMD-33025"/>
<dbReference type="EMDB" id="EMD-33053"/>
<dbReference type="EMDB" id="EMD-34852"/>
<dbReference type="EMDB" id="EMD-35122"/>
<dbReference type="EMDB" id="EMD-35284"/>
<dbReference type="EMDB" id="EMD-35335"/>
<dbReference type="EMDB" id="EMD-40439"/>
<dbReference type="EMDB" id="EMD-40440"/>
<dbReference type="EMDB" id="EMD-40452"/>
<dbReference type="EMDB" id="EMD-40453"/>
<dbReference type="EMDB" id="EMD-40454"/>
<dbReference type="EMDB" id="EMD-40461"/>
<dbReference type="EMDB" id="EMD-40464"/>
<dbReference type="EMDB" id="EMD-40481"/>
<dbReference type="EMDB" id="EMD-40482"/>
<dbReference type="EMDB" id="EMD-40484"/>
<dbReference type="EMDB" id="EMD-40485"/>
<dbReference type="EMDB" id="EMD-40486"/>
<dbReference type="EMDB" id="EMD-40487"/>
<dbReference type="EMDB" id="EMD-40488"/>
<dbReference type="EMDB" id="EMD-40489"/>
<dbReference type="EMDB" id="EMD-40490"/>
<dbReference type="EMDB" id="EMD-40491"/>
<dbReference type="EMDB" id="EMD-40492"/>
<dbReference type="EMDB" id="EMD-40494"/>
<dbReference type="EMDB" id="EMD-4489"/>
<dbReference type="EMDB" id="EMD-5640"/>
<dbReference type="EMDB" id="EMD-5641"/>
<dbReference type="SMR" id="P48643"/>
<dbReference type="BioGRID" id="116603">
    <property type="interactions" value="578"/>
</dbReference>
<dbReference type="ComplexPortal" id="CPX-6030">
    <property type="entry name" value="Chaperonin-containing T-complex"/>
</dbReference>
<dbReference type="CORUM" id="P48643"/>
<dbReference type="DIP" id="DIP-31181N"/>
<dbReference type="FunCoup" id="P48643">
    <property type="interactions" value="3829"/>
</dbReference>
<dbReference type="IntAct" id="P48643">
    <property type="interactions" value="338"/>
</dbReference>
<dbReference type="MINT" id="P48643"/>
<dbReference type="STRING" id="9606.ENSP00000280326"/>
<dbReference type="ChEMBL" id="CHEMBL4295766"/>
<dbReference type="GlyGen" id="P48643">
    <property type="glycosylation" value="1 site, 1 O-linked glycan (1 site)"/>
</dbReference>
<dbReference type="iPTMnet" id="P48643"/>
<dbReference type="MetOSite" id="P48643"/>
<dbReference type="PhosphoSitePlus" id="P48643"/>
<dbReference type="SwissPalm" id="P48643"/>
<dbReference type="BioMuta" id="CCT5"/>
<dbReference type="DMDM" id="1351211"/>
<dbReference type="OGP" id="P48643"/>
<dbReference type="REPRODUCTION-2DPAGE" id="IPI00010720"/>
<dbReference type="jPOST" id="P48643"/>
<dbReference type="MassIVE" id="P48643"/>
<dbReference type="PaxDb" id="9606-ENSP00000280326"/>
<dbReference type="PeptideAtlas" id="P48643"/>
<dbReference type="PRIDE" id="P48643"/>
<dbReference type="ProteomicsDB" id="5518"/>
<dbReference type="ProteomicsDB" id="55918">
    <molecule id="P48643-1"/>
</dbReference>
<dbReference type="Pumba" id="P48643"/>
<dbReference type="ABCD" id="P48643">
    <property type="antibodies" value="1 sequenced antibody"/>
</dbReference>
<dbReference type="Antibodypedia" id="1210">
    <property type="antibodies" value="340 antibodies from 34 providers"/>
</dbReference>
<dbReference type="DNASU" id="22948"/>
<dbReference type="Ensembl" id="ENST00000280326.9">
    <molecule id="P48643-1"/>
    <property type="protein sequence ID" value="ENSP00000280326.4"/>
    <property type="gene ID" value="ENSG00000150753.12"/>
</dbReference>
<dbReference type="Ensembl" id="ENST00000506600.1">
    <molecule id="P48643-2"/>
    <property type="protein sequence ID" value="ENSP00000423052.1"/>
    <property type="gene ID" value="ENSG00000150753.12"/>
</dbReference>
<dbReference type="GeneID" id="22948"/>
<dbReference type="KEGG" id="hsa:22948"/>
<dbReference type="MANE-Select" id="ENST00000280326.9">
    <property type="protein sequence ID" value="ENSP00000280326.4"/>
    <property type="RefSeq nucleotide sequence ID" value="NM_012073.5"/>
    <property type="RefSeq protein sequence ID" value="NP_036205.1"/>
</dbReference>
<dbReference type="UCSC" id="uc011cmt.3">
    <molecule id="P48643-1"/>
    <property type="organism name" value="human"/>
</dbReference>
<dbReference type="AGR" id="HGNC:1618"/>
<dbReference type="CTD" id="22948"/>
<dbReference type="DisGeNET" id="22948"/>
<dbReference type="GeneCards" id="CCT5"/>
<dbReference type="HGNC" id="HGNC:1618">
    <property type="gene designation" value="CCT5"/>
</dbReference>
<dbReference type="HPA" id="ENSG00000150753">
    <property type="expression patterns" value="Low tissue specificity"/>
</dbReference>
<dbReference type="MalaCards" id="CCT5"/>
<dbReference type="MIM" id="256840">
    <property type="type" value="phenotype"/>
</dbReference>
<dbReference type="MIM" id="610150">
    <property type="type" value="gene"/>
</dbReference>
<dbReference type="neXtProt" id="NX_P48643"/>
<dbReference type="OpenTargets" id="ENSG00000150753"/>
<dbReference type="Orphanet" id="139578">
    <property type="disease" value="Mutilating hereditary sensory neuropathy with spastic paraplegia"/>
</dbReference>
<dbReference type="PharmGKB" id="PA26182"/>
<dbReference type="VEuPathDB" id="HostDB:ENSG00000150753"/>
<dbReference type="eggNOG" id="KOG0357">
    <property type="taxonomic scope" value="Eukaryota"/>
</dbReference>
<dbReference type="GeneTree" id="ENSGT00550000074988"/>
<dbReference type="InParanoid" id="P48643"/>
<dbReference type="OMA" id="SHPQMPH"/>
<dbReference type="OrthoDB" id="10248520at2759"/>
<dbReference type="PAN-GO" id="P48643">
    <property type="GO annotations" value="3 GO annotations based on evolutionary models"/>
</dbReference>
<dbReference type="PhylomeDB" id="P48643"/>
<dbReference type="TreeFam" id="TF105638"/>
<dbReference type="BRENDA" id="3.6.4.B10">
    <property type="organism ID" value="2681"/>
</dbReference>
<dbReference type="PathwayCommons" id="P48643"/>
<dbReference type="Reactome" id="R-HSA-389957">
    <property type="pathway name" value="Prefoldin mediated transfer of substrate to CCT/TriC"/>
</dbReference>
<dbReference type="Reactome" id="R-HSA-389960">
    <property type="pathway name" value="Formation of tubulin folding intermediates by CCT/TriC"/>
</dbReference>
<dbReference type="Reactome" id="R-HSA-390450">
    <property type="pathway name" value="Folding of actin by CCT/TriC"/>
</dbReference>
<dbReference type="Reactome" id="R-HSA-390471">
    <property type="pathway name" value="Association of TriC/CCT with target proteins during biosynthesis"/>
</dbReference>
<dbReference type="Reactome" id="R-HSA-5620922">
    <property type="pathway name" value="BBSome-mediated cargo-targeting to cilium"/>
</dbReference>
<dbReference type="Reactome" id="R-HSA-6814122">
    <property type="pathway name" value="Cooperation of PDCL (PhLP1) and TRiC/CCT in G-protein beta folding"/>
</dbReference>
<dbReference type="SignaLink" id="P48643"/>
<dbReference type="SIGNOR" id="P48643"/>
<dbReference type="BioGRID-ORCS" id="22948">
    <property type="hits" value="788 hits in 1150 CRISPR screens"/>
</dbReference>
<dbReference type="CD-CODE" id="91857CE7">
    <property type="entry name" value="Nucleolus"/>
</dbReference>
<dbReference type="CD-CODE" id="FB4E32DD">
    <property type="entry name" value="Presynaptic clusters and postsynaptic densities"/>
</dbReference>
<dbReference type="ChiTaRS" id="CCT5">
    <property type="organism name" value="human"/>
</dbReference>
<dbReference type="GeneWiki" id="CCT5_(gene)"/>
<dbReference type="GenomeRNAi" id="22948"/>
<dbReference type="Pharos" id="P48643">
    <property type="development level" value="Tbio"/>
</dbReference>
<dbReference type="PRO" id="PR:P48643"/>
<dbReference type="Proteomes" id="UP000005640">
    <property type="component" value="Chromosome 5"/>
</dbReference>
<dbReference type="RNAct" id="P48643">
    <property type="molecule type" value="protein"/>
</dbReference>
<dbReference type="Bgee" id="ENSG00000150753">
    <property type="expression patterns" value="Expressed in primordial germ cell in gonad and 211 other cell types or tissues"/>
</dbReference>
<dbReference type="ExpressionAtlas" id="P48643">
    <property type="expression patterns" value="baseline and differential"/>
</dbReference>
<dbReference type="GO" id="GO:0044297">
    <property type="term" value="C:cell body"/>
    <property type="evidence" value="ECO:0007669"/>
    <property type="project" value="Ensembl"/>
</dbReference>
<dbReference type="GO" id="GO:0005813">
    <property type="term" value="C:centrosome"/>
    <property type="evidence" value="ECO:0000314"/>
    <property type="project" value="MGI"/>
</dbReference>
<dbReference type="GO" id="GO:0005832">
    <property type="term" value="C:chaperonin-containing T-complex"/>
    <property type="evidence" value="ECO:0000314"/>
    <property type="project" value="UniProtKB"/>
</dbReference>
<dbReference type="GO" id="GO:0005829">
    <property type="term" value="C:cytosol"/>
    <property type="evidence" value="ECO:0000304"/>
    <property type="project" value="Reactome"/>
</dbReference>
<dbReference type="GO" id="GO:0070062">
    <property type="term" value="C:extracellular exosome"/>
    <property type="evidence" value="ECO:0007005"/>
    <property type="project" value="UniProtKB"/>
</dbReference>
<dbReference type="GO" id="GO:0005874">
    <property type="term" value="C:microtubule"/>
    <property type="evidence" value="ECO:0000314"/>
    <property type="project" value="UniProtKB"/>
</dbReference>
<dbReference type="GO" id="GO:0005524">
    <property type="term" value="F:ATP binding"/>
    <property type="evidence" value="ECO:0007669"/>
    <property type="project" value="UniProtKB-KW"/>
</dbReference>
<dbReference type="GO" id="GO:0016887">
    <property type="term" value="F:ATP hydrolysis activity"/>
    <property type="evidence" value="ECO:0007669"/>
    <property type="project" value="InterPro"/>
</dbReference>
<dbReference type="GO" id="GO:0140662">
    <property type="term" value="F:ATP-dependent protein folding chaperone"/>
    <property type="evidence" value="ECO:0007669"/>
    <property type="project" value="InterPro"/>
</dbReference>
<dbReference type="GO" id="GO:0048487">
    <property type="term" value="F:beta-tubulin binding"/>
    <property type="evidence" value="ECO:0000353"/>
    <property type="project" value="UniProtKB"/>
</dbReference>
<dbReference type="GO" id="GO:0031681">
    <property type="term" value="F:G-protein beta-subunit binding"/>
    <property type="evidence" value="ECO:0000353"/>
    <property type="project" value="UniProtKB"/>
</dbReference>
<dbReference type="GO" id="GO:0003730">
    <property type="term" value="F:mRNA 3'-UTR binding"/>
    <property type="evidence" value="ECO:0000314"/>
    <property type="project" value="CAFA"/>
</dbReference>
<dbReference type="GO" id="GO:0048027">
    <property type="term" value="F:mRNA 5'-UTR binding"/>
    <property type="evidence" value="ECO:0000314"/>
    <property type="project" value="CAFA"/>
</dbReference>
<dbReference type="GO" id="GO:0044183">
    <property type="term" value="F:protein folding chaperone"/>
    <property type="evidence" value="ECO:0000314"/>
    <property type="project" value="BHF-UCL"/>
</dbReference>
<dbReference type="GO" id="GO:0051082">
    <property type="term" value="F:unfolded protein binding"/>
    <property type="evidence" value="ECO:0000318"/>
    <property type="project" value="GO_Central"/>
</dbReference>
<dbReference type="GO" id="GO:0007339">
    <property type="term" value="P:binding of sperm to zona pellucida"/>
    <property type="evidence" value="ECO:0007669"/>
    <property type="project" value="Ensembl"/>
</dbReference>
<dbReference type="GO" id="GO:0051086">
    <property type="term" value="P:chaperone mediated protein folding independent of cofactor"/>
    <property type="evidence" value="ECO:0000315"/>
    <property type="project" value="BHF-UCL"/>
</dbReference>
<dbReference type="GO" id="GO:0061077">
    <property type="term" value="P:chaperone-mediated protein folding"/>
    <property type="evidence" value="ECO:0000314"/>
    <property type="project" value="ComplexPortal"/>
</dbReference>
<dbReference type="GO" id="GO:1904871">
    <property type="term" value="P:positive regulation of protein localization to Cajal body"/>
    <property type="evidence" value="ECO:0007001"/>
    <property type="project" value="BHF-UCL"/>
</dbReference>
<dbReference type="GO" id="GO:1904874">
    <property type="term" value="P:positive regulation of telomerase RNA localization to Cajal body"/>
    <property type="evidence" value="ECO:0007001"/>
    <property type="project" value="BHF-UCL"/>
</dbReference>
<dbReference type="GO" id="GO:0032212">
    <property type="term" value="P:positive regulation of telomere maintenance via telomerase"/>
    <property type="evidence" value="ECO:0000315"/>
    <property type="project" value="BHF-UCL"/>
</dbReference>
<dbReference type="GO" id="GO:0006457">
    <property type="term" value="P:protein folding"/>
    <property type="evidence" value="ECO:0000314"/>
    <property type="project" value="FlyBase"/>
</dbReference>
<dbReference type="GO" id="GO:0050821">
    <property type="term" value="P:protein stabilization"/>
    <property type="evidence" value="ECO:0000315"/>
    <property type="project" value="BHF-UCL"/>
</dbReference>
<dbReference type="GO" id="GO:0009615">
    <property type="term" value="P:response to virus"/>
    <property type="evidence" value="ECO:0000270"/>
    <property type="project" value="UniProtKB"/>
</dbReference>
<dbReference type="CDD" id="cd03339">
    <property type="entry name" value="TCP1_epsilon"/>
    <property type="match status" value="1"/>
</dbReference>
<dbReference type="FunFam" id="1.10.560.10:FF:000053">
    <property type="entry name" value="T-complex protein 1 subunit delta"/>
    <property type="match status" value="1"/>
</dbReference>
<dbReference type="FunFam" id="3.30.260.10:FF:000028">
    <property type="entry name" value="T-complex protein 1 subunit epsilon"/>
    <property type="match status" value="1"/>
</dbReference>
<dbReference type="FunFam" id="3.50.7.10:FF:000003">
    <property type="entry name" value="T-complex protein 1 subunit epsilon"/>
    <property type="match status" value="1"/>
</dbReference>
<dbReference type="FunFam" id="1.10.560.10:FF:000049">
    <property type="entry name" value="T-complex protein 1 subunitTheta, putative"/>
    <property type="match status" value="1"/>
</dbReference>
<dbReference type="Gene3D" id="3.50.7.10">
    <property type="entry name" value="GroEL"/>
    <property type="match status" value="1"/>
</dbReference>
<dbReference type="Gene3D" id="1.10.560.10">
    <property type="entry name" value="GroEL-like equatorial domain"/>
    <property type="match status" value="1"/>
</dbReference>
<dbReference type="Gene3D" id="3.30.260.10">
    <property type="entry name" value="TCP-1-like chaperonin intermediate domain"/>
    <property type="match status" value="1"/>
</dbReference>
<dbReference type="InterPro" id="IPR012718">
    <property type="entry name" value="Chap_CCT_epsi"/>
</dbReference>
<dbReference type="InterPro" id="IPR017998">
    <property type="entry name" value="Chaperone_TCP-1"/>
</dbReference>
<dbReference type="InterPro" id="IPR002194">
    <property type="entry name" value="Chaperonin_TCP-1_CS"/>
</dbReference>
<dbReference type="InterPro" id="IPR002423">
    <property type="entry name" value="Cpn60/GroEL/TCP-1"/>
</dbReference>
<dbReference type="InterPro" id="IPR027409">
    <property type="entry name" value="GroEL-like_apical_dom_sf"/>
</dbReference>
<dbReference type="InterPro" id="IPR027413">
    <property type="entry name" value="GROEL-like_equatorial_sf"/>
</dbReference>
<dbReference type="InterPro" id="IPR027410">
    <property type="entry name" value="TCP-1-like_intermed_sf"/>
</dbReference>
<dbReference type="InterPro" id="IPR053374">
    <property type="entry name" value="TCP-1_chaperonin"/>
</dbReference>
<dbReference type="InterPro" id="IPR054827">
    <property type="entry name" value="thermosome_alpha"/>
</dbReference>
<dbReference type="NCBIfam" id="TIGR02343">
    <property type="entry name" value="chap_CCT_epsi"/>
    <property type="match status" value="1"/>
</dbReference>
<dbReference type="NCBIfam" id="NF041082">
    <property type="entry name" value="thermosome_alpha"/>
    <property type="match status" value="1"/>
</dbReference>
<dbReference type="NCBIfam" id="NF041083">
    <property type="entry name" value="thermosome_beta"/>
    <property type="match status" value="1"/>
</dbReference>
<dbReference type="PANTHER" id="PTHR11353">
    <property type="entry name" value="CHAPERONIN"/>
    <property type="match status" value="1"/>
</dbReference>
<dbReference type="Pfam" id="PF00118">
    <property type="entry name" value="Cpn60_TCP1"/>
    <property type="match status" value="1"/>
</dbReference>
<dbReference type="PRINTS" id="PR00304">
    <property type="entry name" value="TCOMPLEXTCP1"/>
</dbReference>
<dbReference type="SUPFAM" id="SSF52029">
    <property type="entry name" value="GroEL apical domain-like"/>
    <property type="match status" value="1"/>
</dbReference>
<dbReference type="SUPFAM" id="SSF48592">
    <property type="entry name" value="GroEL equatorial domain-like"/>
    <property type="match status" value="1"/>
</dbReference>
<dbReference type="SUPFAM" id="SSF54849">
    <property type="entry name" value="GroEL-intermediate domain like"/>
    <property type="match status" value="1"/>
</dbReference>
<dbReference type="PROSITE" id="PS00750">
    <property type="entry name" value="TCP1_1"/>
    <property type="match status" value="1"/>
</dbReference>
<dbReference type="PROSITE" id="PS00751">
    <property type="entry name" value="TCP1_2"/>
    <property type="match status" value="1"/>
</dbReference>
<dbReference type="PROSITE" id="PS00995">
    <property type="entry name" value="TCP1_3"/>
    <property type="match status" value="1"/>
</dbReference>
<proteinExistence type="evidence at protein level"/>
<reference key="1">
    <citation type="journal article" date="1995" name="DNA Res.">
        <title>Prediction of the coding sequences of unidentified human genes. III. The coding sequences of 40 new genes (KIAA0081-KIAA0120) deduced by analysis of cDNA clones from human cell line KG-1.</title>
        <authorList>
            <person name="Nagase T."/>
            <person name="Miyajima N."/>
            <person name="Tanaka A."/>
            <person name="Sazuka T."/>
            <person name="Seki N."/>
            <person name="Sato S."/>
            <person name="Tabata S."/>
            <person name="Ishikawa K."/>
            <person name="Kawarabayasi Y."/>
            <person name="Kotani H."/>
            <person name="Nomura N."/>
        </authorList>
    </citation>
    <scope>NUCLEOTIDE SEQUENCE [LARGE SCALE MRNA] (ISOFORM 1)</scope>
    <source>
        <tissue>Bone marrow</tissue>
    </source>
</reference>
<reference key="2">
    <citation type="journal article" date="2004" name="Nat. Genet.">
        <title>Complete sequencing and characterization of 21,243 full-length human cDNAs.</title>
        <authorList>
            <person name="Ota T."/>
            <person name="Suzuki Y."/>
            <person name="Nishikawa T."/>
            <person name="Otsuki T."/>
            <person name="Sugiyama T."/>
            <person name="Irie R."/>
            <person name="Wakamatsu A."/>
            <person name="Hayashi K."/>
            <person name="Sato H."/>
            <person name="Nagai K."/>
            <person name="Kimura K."/>
            <person name="Makita H."/>
            <person name="Sekine M."/>
            <person name="Obayashi M."/>
            <person name="Nishi T."/>
            <person name="Shibahara T."/>
            <person name="Tanaka T."/>
            <person name="Ishii S."/>
            <person name="Yamamoto J."/>
            <person name="Saito K."/>
            <person name="Kawai Y."/>
            <person name="Isono Y."/>
            <person name="Nakamura Y."/>
            <person name="Nagahari K."/>
            <person name="Murakami K."/>
            <person name="Yasuda T."/>
            <person name="Iwayanagi T."/>
            <person name="Wagatsuma M."/>
            <person name="Shiratori A."/>
            <person name="Sudo H."/>
            <person name="Hosoiri T."/>
            <person name="Kaku Y."/>
            <person name="Kodaira H."/>
            <person name="Kondo H."/>
            <person name="Sugawara M."/>
            <person name="Takahashi M."/>
            <person name="Kanda K."/>
            <person name="Yokoi T."/>
            <person name="Furuya T."/>
            <person name="Kikkawa E."/>
            <person name="Omura Y."/>
            <person name="Abe K."/>
            <person name="Kamihara K."/>
            <person name="Katsuta N."/>
            <person name="Sato K."/>
            <person name="Tanikawa M."/>
            <person name="Yamazaki M."/>
            <person name="Ninomiya K."/>
            <person name="Ishibashi T."/>
            <person name="Yamashita H."/>
            <person name="Murakawa K."/>
            <person name="Fujimori K."/>
            <person name="Tanai H."/>
            <person name="Kimata M."/>
            <person name="Watanabe M."/>
            <person name="Hiraoka S."/>
            <person name="Chiba Y."/>
            <person name="Ishida S."/>
            <person name="Ono Y."/>
            <person name="Takiguchi S."/>
            <person name="Watanabe S."/>
            <person name="Yosida M."/>
            <person name="Hotuta T."/>
            <person name="Kusano J."/>
            <person name="Kanehori K."/>
            <person name="Takahashi-Fujii A."/>
            <person name="Hara H."/>
            <person name="Tanase T.-O."/>
            <person name="Nomura Y."/>
            <person name="Togiya S."/>
            <person name="Komai F."/>
            <person name="Hara R."/>
            <person name="Takeuchi K."/>
            <person name="Arita M."/>
            <person name="Imose N."/>
            <person name="Musashino K."/>
            <person name="Yuuki H."/>
            <person name="Oshima A."/>
            <person name="Sasaki N."/>
            <person name="Aotsuka S."/>
            <person name="Yoshikawa Y."/>
            <person name="Matsunawa H."/>
            <person name="Ichihara T."/>
            <person name="Shiohata N."/>
            <person name="Sano S."/>
            <person name="Moriya S."/>
            <person name="Momiyama H."/>
            <person name="Satoh N."/>
            <person name="Takami S."/>
            <person name="Terashima Y."/>
            <person name="Suzuki O."/>
            <person name="Nakagawa S."/>
            <person name="Senoh A."/>
            <person name="Mizoguchi H."/>
            <person name="Goto Y."/>
            <person name="Shimizu F."/>
            <person name="Wakebe H."/>
            <person name="Hishigaki H."/>
            <person name="Watanabe T."/>
            <person name="Sugiyama A."/>
            <person name="Takemoto M."/>
            <person name="Kawakami B."/>
            <person name="Yamazaki M."/>
            <person name="Watanabe K."/>
            <person name="Kumagai A."/>
            <person name="Itakura S."/>
            <person name="Fukuzumi Y."/>
            <person name="Fujimori Y."/>
            <person name="Komiyama M."/>
            <person name="Tashiro H."/>
            <person name="Tanigami A."/>
            <person name="Fujiwara T."/>
            <person name="Ono T."/>
            <person name="Yamada K."/>
            <person name="Fujii Y."/>
            <person name="Ozaki K."/>
            <person name="Hirao M."/>
            <person name="Ohmori Y."/>
            <person name="Kawabata A."/>
            <person name="Hikiji T."/>
            <person name="Kobatake N."/>
            <person name="Inagaki H."/>
            <person name="Ikema Y."/>
            <person name="Okamoto S."/>
            <person name="Okitani R."/>
            <person name="Kawakami T."/>
            <person name="Noguchi S."/>
            <person name="Itoh T."/>
            <person name="Shigeta K."/>
            <person name="Senba T."/>
            <person name="Matsumura K."/>
            <person name="Nakajima Y."/>
            <person name="Mizuno T."/>
            <person name="Morinaga M."/>
            <person name="Sasaki M."/>
            <person name="Togashi T."/>
            <person name="Oyama M."/>
            <person name="Hata H."/>
            <person name="Watanabe M."/>
            <person name="Komatsu T."/>
            <person name="Mizushima-Sugano J."/>
            <person name="Satoh T."/>
            <person name="Shirai Y."/>
            <person name="Takahashi Y."/>
            <person name="Nakagawa K."/>
            <person name="Okumura K."/>
            <person name="Nagase T."/>
            <person name="Nomura N."/>
            <person name="Kikuchi H."/>
            <person name="Masuho Y."/>
            <person name="Yamashita R."/>
            <person name="Nakai K."/>
            <person name="Yada T."/>
            <person name="Nakamura Y."/>
            <person name="Ohara O."/>
            <person name="Isogai T."/>
            <person name="Sugano S."/>
        </authorList>
    </citation>
    <scope>NUCLEOTIDE SEQUENCE [LARGE SCALE MRNA] (ISOFORMS 1 AND 2)</scope>
    <source>
        <tissue>Testis</tissue>
        <tissue>Umbilical cord blood</tissue>
    </source>
</reference>
<reference key="3">
    <citation type="journal article" date="2004" name="Nature">
        <title>The DNA sequence and comparative analysis of human chromosome 5.</title>
        <authorList>
            <person name="Schmutz J."/>
            <person name="Martin J."/>
            <person name="Terry A."/>
            <person name="Couronne O."/>
            <person name="Grimwood J."/>
            <person name="Lowry S."/>
            <person name="Gordon L.A."/>
            <person name="Scott D."/>
            <person name="Xie G."/>
            <person name="Huang W."/>
            <person name="Hellsten U."/>
            <person name="Tran-Gyamfi M."/>
            <person name="She X."/>
            <person name="Prabhakar S."/>
            <person name="Aerts A."/>
            <person name="Altherr M."/>
            <person name="Bajorek E."/>
            <person name="Black S."/>
            <person name="Branscomb E."/>
            <person name="Caoile C."/>
            <person name="Challacombe J.F."/>
            <person name="Chan Y.M."/>
            <person name="Denys M."/>
            <person name="Detter J.C."/>
            <person name="Escobar J."/>
            <person name="Flowers D."/>
            <person name="Fotopulos D."/>
            <person name="Glavina T."/>
            <person name="Gomez M."/>
            <person name="Gonzales E."/>
            <person name="Goodstein D."/>
            <person name="Grigoriev I."/>
            <person name="Groza M."/>
            <person name="Hammon N."/>
            <person name="Hawkins T."/>
            <person name="Haydu L."/>
            <person name="Israni S."/>
            <person name="Jett J."/>
            <person name="Kadner K."/>
            <person name="Kimball H."/>
            <person name="Kobayashi A."/>
            <person name="Lopez F."/>
            <person name="Lou Y."/>
            <person name="Martinez D."/>
            <person name="Medina C."/>
            <person name="Morgan J."/>
            <person name="Nandkeshwar R."/>
            <person name="Noonan J.P."/>
            <person name="Pitluck S."/>
            <person name="Pollard M."/>
            <person name="Predki P."/>
            <person name="Priest J."/>
            <person name="Ramirez L."/>
            <person name="Retterer J."/>
            <person name="Rodriguez A."/>
            <person name="Rogers S."/>
            <person name="Salamov A."/>
            <person name="Salazar A."/>
            <person name="Thayer N."/>
            <person name="Tice H."/>
            <person name="Tsai M."/>
            <person name="Ustaszewska A."/>
            <person name="Vo N."/>
            <person name="Wheeler J."/>
            <person name="Wu K."/>
            <person name="Yang J."/>
            <person name="Dickson M."/>
            <person name="Cheng J.-F."/>
            <person name="Eichler E.E."/>
            <person name="Olsen A."/>
            <person name="Pennacchio L.A."/>
            <person name="Rokhsar D.S."/>
            <person name="Richardson P."/>
            <person name="Lucas S.M."/>
            <person name="Myers R.M."/>
            <person name="Rubin E.M."/>
        </authorList>
    </citation>
    <scope>NUCLEOTIDE SEQUENCE [LARGE SCALE GENOMIC DNA]</scope>
</reference>
<reference key="4">
    <citation type="submission" date="2005-09" db="EMBL/GenBank/DDBJ databases">
        <authorList>
            <person name="Mural R.J."/>
            <person name="Istrail S."/>
            <person name="Sutton G.G."/>
            <person name="Florea L."/>
            <person name="Halpern A.L."/>
            <person name="Mobarry C.M."/>
            <person name="Lippert R."/>
            <person name="Walenz B."/>
            <person name="Shatkay H."/>
            <person name="Dew I."/>
            <person name="Miller J.R."/>
            <person name="Flanigan M.J."/>
            <person name="Edwards N.J."/>
            <person name="Bolanos R."/>
            <person name="Fasulo D."/>
            <person name="Halldorsson B.V."/>
            <person name="Hannenhalli S."/>
            <person name="Turner R."/>
            <person name="Yooseph S."/>
            <person name="Lu F."/>
            <person name="Nusskern D.R."/>
            <person name="Shue B.C."/>
            <person name="Zheng X.H."/>
            <person name="Zhong F."/>
            <person name="Delcher A.L."/>
            <person name="Huson D.H."/>
            <person name="Kravitz S.A."/>
            <person name="Mouchard L."/>
            <person name="Reinert K."/>
            <person name="Remington K.A."/>
            <person name="Clark A.G."/>
            <person name="Waterman M.S."/>
            <person name="Eichler E.E."/>
            <person name="Adams M.D."/>
            <person name="Hunkapiller M.W."/>
            <person name="Myers E.W."/>
            <person name="Venter J.C."/>
        </authorList>
    </citation>
    <scope>NUCLEOTIDE SEQUENCE [LARGE SCALE GENOMIC DNA]</scope>
</reference>
<reference key="5">
    <citation type="journal article" date="2004" name="Genome Res.">
        <title>The status, quality, and expansion of the NIH full-length cDNA project: the Mammalian Gene Collection (MGC).</title>
        <authorList>
            <consortium name="The MGC Project Team"/>
        </authorList>
    </citation>
    <scope>NUCLEOTIDE SEQUENCE [LARGE SCALE MRNA] (ISOFORM 1)</scope>
    <source>
        <tissue>Lung</tissue>
        <tissue>Uterus</tissue>
    </source>
</reference>
<reference key="6">
    <citation type="submission" date="2008-03" db="UniProtKB">
        <authorList>
            <person name="Bienvenut W.V."/>
            <person name="Vousden K.H."/>
            <person name="Lukashchuk N."/>
        </authorList>
    </citation>
    <scope>PROTEIN SEQUENCE OF 2-24; 28-35; 50-59; 90-96; 133-170; 184-201; 203-214; 248-261; 264-275; 283-293; 324-340; 345-368; 382-388; 393-399; 401-410; 484-496; 514-525 AND 530-541</scope>
    <scope>CLEAVAGE OF INITIATOR METHIONINE</scope>
    <scope>ACETYLATION AT ALA-2</scope>
    <scope>IDENTIFICATION BY MASS SPECTROMETRY</scope>
    <source>
        <tissue>Lung carcinoma</tissue>
    </source>
</reference>
<reference key="7">
    <citation type="submission" date="2009-03" db="UniProtKB">
        <authorList>
            <person name="Bienvenut W.V."/>
            <person name="Waridel P."/>
            <person name="Quadroni M."/>
        </authorList>
    </citation>
    <scope>PROTEIN SEQUENCE OF 2-20; 97-126; 133-170; 184-201; 203-214; 266-275; 294-340; 345-368; 382-388 AND 401-410</scope>
    <scope>CLEAVAGE OF INITIATOR METHIONINE</scope>
    <scope>ACETYLATION AT ALA-2</scope>
    <scope>IDENTIFICATION BY MASS SPECTROMETRY</scope>
    <source>
        <tissue>Embryonic kidney</tissue>
    </source>
</reference>
<reference key="8">
    <citation type="submission" date="2008-12" db="UniProtKB">
        <authorList>
            <person name="Lubec G."/>
            <person name="Afjehi-Sadat L."/>
            <person name="Chen W.-Q."/>
            <person name="Sun Y."/>
        </authorList>
    </citation>
    <scope>PROTEIN SEQUENCE OF 203-210; 248-261; 324-340; 353-368 AND 515-525</scope>
    <scope>IDENTIFICATION BY MASS SPECTROMETRY</scope>
    <source>
        <tissue>Brain</tissue>
        <tissue>Cajal-Retzius cell</tissue>
        <tissue>Fetal brain cortex</tissue>
    </source>
</reference>
<reference key="9">
    <citation type="journal article" date="2003" name="J. Biol. Chem.">
        <title>A product of the human gene adjacent to parkin is a component of Lewy bodies and suppresses Pael receptor-induced cell death.</title>
        <authorList>
            <person name="Imai Y."/>
            <person name="Soda M."/>
            <person name="Murakami T."/>
            <person name="Shoji M."/>
            <person name="Abe K."/>
            <person name="Takahashi R."/>
        </authorList>
    </citation>
    <scope>INTERACTION WITH PACRG</scope>
</reference>
<reference key="10">
    <citation type="journal article" date="2003" name="Nature">
        <title>Proteomic characterization of the human centrosome by protein correlation profiling.</title>
        <authorList>
            <person name="Andersen J.S."/>
            <person name="Wilkinson C.J."/>
            <person name="Mayor T."/>
            <person name="Mortensen P."/>
            <person name="Nigg E.A."/>
            <person name="Mann M."/>
        </authorList>
    </citation>
    <scope>IDENTIFICATION BY MASS SPECTROMETRY</scope>
    <scope>SUBCELLULAR LOCATION [LARGE SCALE ANALYSIS]</scope>
    <source>
        <tissue>Lymphoblast</tissue>
    </source>
</reference>
<reference key="11">
    <citation type="journal article" date="2006" name="Cell. Microbiol.">
        <title>Transcriptomic and proteomic analyses of rhabdomyosarcoma cells reveal differential cellular gene expression in response to enterovirus 71 infection.</title>
        <authorList>
            <person name="Leong W.F."/>
            <person name="Chow V.T."/>
        </authorList>
    </citation>
    <scope>INDUCTION</scope>
    <scope>IDENTIFICATION BY MASS SPECTROMETRY</scope>
</reference>
<reference key="12">
    <citation type="journal article" date="2009" name="Anal. Chem.">
        <title>Lys-N and trypsin cover complementary parts of the phosphoproteome in a refined SCX-based approach.</title>
        <authorList>
            <person name="Gauci S."/>
            <person name="Helbig A.O."/>
            <person name="Slijper M."/>
            <person name="Krijgsveld J."/>
            <person name="Heck A.J."/>
            <person name="Mohammed S."/>
        </authorList>
    </citation>
    <scope>ACETYLATION [LARGE SCALE ANALYSIS] AT ALA-2</scope>
    <scope>CLEAVAGE OF INITIATOR METHIONINE [LARGE SCALE ANALYSIS]</scope>
    <scope>IDENTIFICATION BY MASS SPECTROMETRY [LARGE SCALE ANALYSIS]</scope>
</reference>
<reference key="13">
    <citation type="journal article" date="2010" name="Proc. Natl. Acad. Sci. U.S.A.">
        <title>BBS6, BBS10, and BBS12 form a complex with CCT/TRiC family chaperonins and mediate BBSome assembly.</title>
        <authorList>
            <person name="Seo S."/>
            <person name="Baye L.M."/>
            <person name="Schulz N.P."/>
            <person name="Beck J.S."/>
            <person name="Zhang Q."/>
            <person name="Slusarski D.C."/>
            <person name="Sheffield V.C."/>
        </authorList>
    </citation>
    <scope>FUNCTION</scope>
    <scope>SUBCELLULAR LOCATION</scope>
    <scope>IDENTIFICATION IN CHAPERONIN-CONTAINING T-COMPLEX</scope>
</reference>
<reference key="14">
    <citation type="journal article" date="2011" name="BMC Syst. Biol.">
        <title>Initial characterization of the human central proteome.</title>
        <authorList>
            <person name="Burkard T.R."/>
            <person name="Planyavsky M."/>
            <person name="Kaupe I."/>
            <person name="Breitwieser F.P."/>
            <person name="Buerckstuemmer T."/>
            <person name="Bennett K.L."/>
            <person name="Superti-Furga G."/>
            <person name="Colinge J."/>
        </authorList>
    </citation>
    <scope>IDENTIFICATION BY MASS SPECTROMETRY [LARGE SCALE ANALYSIS]</scope>
</reference>
<reference key="15">
    <citation type="journal article" date="2011" name="Sci. Signal.">
        <title>System-wide temporal characterization of the proteome and phosphoproteome of human embryonic stem cell differentiation.</title>
        <authorList>
            <person name="Rigbolt K.T."/>
            <person name="Prokhorova T.A."/>
            <person name="Akimov V."/>
            <person name="Henningsen J."/>
            <person name="Johansen P.T."/>
            <person name="Kratchmarova I."/>
            <person name="Kassem M."/>
            <person name="Mann M."/>
            <person name="Olsen J.V."/>
            <person name="Blagoev B."/>
        </authorList>
    </citation>
    <scope>PHOSPHORYLATION [LARGE SCALE ANALYSIS] AT SER-26</scope>
    <scope>IDENTIFICATION BY MASS SPECTROMETRY [LARGE SCALE ANALYSIS]</scope>
</reference>
<reference key="16">
    <citation type="journal article" date="2012" name="Mol. Cell. Proteomics">
        <title>Comparative large-scale characterisation of plant vs. mammal proteins reveals similar and idiosyncratic N-alpha acetylation features.</title>
        <authorList>
            <person name="Bienvenut W.V."/>
            <person name="Sumpton D."/>
            <person name="Martinez A."/>
            <person name="Lilla S."/>
            <person name="Espagne C."/>
            <person name="Meinnel T."/>
            <person name="Giglione C."/>
        </authorList>
    </citation>
    <scope>ACETYLATION [LARGE SCALE ANALYSIS] AT ALA-2</scope>
    <scope>CLEAVAGE OF INITIATOR METHIONINE [LARGE SCALE ANALYSIS]</scope>
    <scope>IDENTIFICATION BY MASS SPECTROMETRY [LARGE SCALE ANALYSIS]</scope>
</reference>
<reference key="17">
    <citation type="journal article" date="2012" name="Proc. Natl. Acad. Sci. U.S.A.">
        <title>N-terminal acetylome analyses and functional insights of the N-terminal acetyltransferase NatB.</title>
        <authorList>
            <person name="Van Damme P."/>
            <person name="Lasa M."/>
            <person name="Polevoda B."/>
            <person name="Gazquez C."/>
            <person name="Elosegui-Artola A."/>
            <person name="Kim D.S."/>
            <person name="De Juan-Pardo E."/>
            <person name="Demeyer K."/>
            <person name="Hole K."/>
            <person name="Larrea E."/>
            <person name="Timmerman E."/>
            <person name="Prieto J."/>
            <person name="Arnesen T."/>
            <person name="Sherman F."/>
            <person name="Gevaert K."/>
            <person name="Aldabe R."/>
        </authorList>
    </citation>
    <scope>ACETYLATION [LARGE SCALE ANALYSIS] AT ALA-2</scope>
    <scope>CLEAVAGE OF INITIATOR METHIONINE [LARGE SCALE ANALYSIS]</scope>
    <scope>IDENTIFICATION BY MASS SPECTROMETRY [LARGE SCALE ANALYSIS]</scope>
</reference>
<reference key="18">
    <citation type="journal article" date="2013" name="J. Biol. Chem.">
        <title>Human CCT4 and CCT5 chaperonin subunits expressed in Escherichia coli form biologically active homo-oligomers.</title>
        <authorList>
            <person name="Sergeeva O.A."/>
            <person name="Chen B."/>
            <person name="Haase-Pettingell C."/>
            <person name="Ludtke S.J."/>
            <person name="Chiu W."/>
            <person name="King J.A."/>
        </authorList>
    </citation>
    <scope>CATALYTIC ACTIVITY</scope>
</reference>
<reference key="19">
    <citation type="journal article" date="2013" name="J. Proteome Res.">
        <title>Toward a comprehensive characterization of a human cancer cell phosphoproteome.</title>
        <authorList>
            <person name="Zhou H."/>
            <person name="Di Palma S."/>
            <person name="Preisinger C."/>
            <person name="Peng M."/>
            <person name="Polat A.N."/>
            <person name="Heck A.J."/>
            <person name="Mohammed S."/>
        </authorList>
    </citation>
    <scope>PHOSPHORYLATION [LARGE SCALE ANALYSIS] AT SER-346 AND SER-539</scope>
    <scope>IDENTIFICATION BY MASS SPECTROMETRY [LARGE SCALE ANALYSIS]</scope>
    <source>
        <tissue>Erythroleukemia</tissue>
    </source>
</reference>
<reference key="20">
    <citation type="journal article" date="2014" name="Cell">
        <title>Proteostatic control of telomerase function through TRiC-mediated folding of TCAB1.</title>
        <authorList>
            <person name="Freund A."/>
            <person name="Zhong F.L."/>
            <person name="Venteicher A.S."/>
            <person name="Meng Z."/>
            <person name="Veenstra T.D."/>
            <person name="Frydman J."/>
            <person name="Artandi S.E."/>
        </authorList>
    </citation>
    <scope>FUNCTION</scope>
    <scope>IDENTIFICATION IN THE CHAPERONIN-CONTAINING T-COMPLEX</scope>
</reference>
<reference key="21">
    <citation type="journal article" date="2014" name="J. Proteomics">
        <title>An enzyme assisted RP-RPLC approach for in-depth analysis of human liver phosphoproteome.</title>
        <authorList>
            <person name="Bian Y."/>
            <person name="Song C."/>
            <person name="Cheng K."/>
            <person name="Dong M."/>
            <person name="Wang F."/>
            <person name="Huang J."/>
            <person name="Sun D."/>
            <person name="Wang L."/>
            <person name="Ye M."/>
            <person name="Zou H."/>
        </authorList>
    </citation>
    <scope>IDENTIFICATION BY MASS SPECTROMETRY [LARGE SCALE ANALYSIS]</scope>
    <source>
        <tissue>Liver</tissue>
    </source>
</reference>
<reference key="22">
    <citation type="journal article" date="2015" name="Proteomics">
        <title>N-terminome analysis of the human mitochondrial proteome.</title>
        <authorList>
            <person name="Vaca Jacome A.S."/>
            <person name="Rabilloud T."/>
            <person name="Schaeffer-Reiss C."/>
            <person name="Rompais M."/>
            <person name="Ayoub D."/>
            <person name="Lane L."/>
            <person name="Bairoch A."/>
            <person name="Van Dorsselaer A."/>
            <person name="Carapito C."/>
        </authorList>
    </citation>
    <scope>ACETYLATION [LARGE SCALE ANALYSIS] AT ALA-2</scope>
    <scope>CLEAVAGE OF INITIATOR METHIONINE [LARGE SCALE ANALYSIS]</scope>
    <scope>IDENTIFICATION BY MASS SPECTROMETRY [LARGE SCALE ANALYSIS]</scope>
</reference>
<reference key="23">
    <citation type="journal article" date="2017" name="Nat. Struct. Mol. Biol.">
        <title>Site-specific mapping of the human SUMO proteome reveals co-modification with phosphorylation.</title>
        <authorList>
            <person name="Hendriks I.A."/>
            <person name="Lyon D."/>
            <person name="Young C."/>
            <person name="Jensen L.J."/>
            <person name="Vertegaal A.C."/>
            <person name="Nielsen M.L."/>
        </authorList>
    </citation>
    <scope>SUMOYLATION [LARGE SCALE ANALYSIS] AT LYS-20; LYS-210; LYS-214; LYS-265; LYS-275; LYS-279 AND LYS-392</scope>
    <scope>IDENTIFICATION BY MASS SPECTROMETRY [LARGE SCALE ANALYSIS]</scope>
</reference>
<reference key="24">
    <citation type="journal article" date="2018" name="Cell">
        <title>The eukaryotic proteome is shaped by E3 ubiquitin ligases targeting C-terminal degrons.</title>
        <authorList>
            <person name="Koren I."/>
            <person name="Timms R.T."/>
            <person name="Kula T."/>
            <person name="Xu Q."/>
            <person name="Li M.Z."/>
            <person name="Elledge S.J."/>
        </authorList>
    </citation>
    <scope>UBIQUITINATION</scope>
</reference>
<reference key="25">
    <citation type="journal article" date="2020" name="Sci. Rep.">
        <title>Dlec1 is required for spermatogenesis and male fertility in mice.</title>
        <authorList>
            <person name="Okitsu Y."/>
            <person name="Nagano M."/>
            <person name="Yamagata T."/>
            <person name="Ito C."/>
            <person name="Toshimori K."/>
            <person name="Dohra H."/>
            <person name="Fujii W."/>
            <person name="Yogo K."/>
        </authorList>
    </citation>
    <scope>INTERACTION WITH DLEC1</scope>
</reference>
<reference key="26">
    <citation type="journal article" date="2006" name="J. Med. Genet.">
        <title>Mutation in the epsilon subunit of the cytosolic chaperonin-containing T-complex peptide-1 (Cct5) gene causes autosomal recessive mutilating sensory neuropathy with spastic paraplegia.</title>
        <authorList>
            <person name="Bouhouche A."/>
            <person name="Benomar A."/>
            <person name="Bouslam N."/>
            <person name="Chkili T."/>
            <person name="Yahyaoui M."/>
        </authorList>
    </citation>
    <scope>VARIANT HSNSP ARG-147</scope>
</reference>
<reference evidence="24 25 26 27 28" key="27">
    <citation type="journal article" date="2022" name="Cell">
        <title>Structural visualization of the tubulin folding pathway directed by human chaperonin TRiC/CCT.</title>
        <authorList>
            <person name="Gestaut D."/>
            <person name="Zhao Y."/>
            <person name="Park J."/>
            <person name="Ma B."/>
            <person name="Leitner A."/>
            <person name="Collier M."/>
            <person name="Pintilie G."/>
            <person name="Roh S.H."/>
            <person name="Chiu W."/>
            <person name="Frydman J."/>
        </authorList>
    </citation>
    <scope>STRUCTURE BY ELECTRON MICROSCOPY (2.90 ANGSTROMS) IN COMPLEX WITH TUBULIN</scope>
    <scope>FUNCTION</scope>
    <scope>SUBUNIT</scope>
    <scope>ADP AND MG(2+) BINDING SITES</scope>
</reference>
<reference evidence="20 21 22 23" key="28">
    <citation type="journal article" date="2022" name="Nat. Struct. Mol. Biol.">
        <title>Snapshots of actin and tubulin folding inside the TRiC chaperonin.</title>
        <authorList>
            <person name="Kelly J.J."/>
            <person name="Tranter D."/>
            <person name="Pardon E."/>
            <person name="Chi G."/>
            <person name="Kramer H."/>
            <person name="Happonen L."/>
            <person name="Knee K.M."/>
            <person name="Janz J.M."/>
            <person name="Steyaert J."/>
            <person name="Bulawa C."/>
            <person name="Paavilainen V.O."/>
            <person name="Huiskonen J.T."/>
            <person name="Yue W.W."/>
        </authorList>
    </citation>
    <scope>STRUCTURE BY ELECTRON MICROSCOPY (2.50 ANGSTROMS) IN COMPLEX WITH TUBULIN AND IN COMPLEX WITH ACTIN</scope>
    <scope>FUNCTION</scope>
    <scope>SUBUNIT</scope>
    <scope>ADP AND MG(2+) BINDING SITES</scope>
</reference>
<reference evidence="29 30 31 32 33 34 35 36" key="29">
    <citation type="journal article" date="2023" name="Commun. Biol.">
        <title>Pathway and mechanism of tubulin folding mediated by TRiC/CCT along its ATPase cycle revealed using cryo-EM.</title>
        <authorList>
            <person name="Liu C."/>
            <person name="Jin M."/>
            <person name="Wang S."/>
            <person name="Han W."/>
            <person name="Zhao Q."/>
            <person name="Wang Y."/>
            <person name="Xu C."/>
            <person name="Diao L."/>
            <person name="Yin Y."/>
            <person name="Peng C."/>
            <person name="Peng C."/>
            <person name="Bao L."/>
            <person name="Wang Y."/>
            <person name="Cong Y."/>
        </authorList>
    </citation>
    <scope>STRUCTURE BY ELECTRON MICROSCOPY (3.10 ANGSTROMS) IN COMPLEX WITH TUBULIN</scope>
    <scope>FUNCTION</scope>
    <scope>SUBUNIT</scope>
    <scope>ATP AND ADP BINDING SITES</scope>
</reference>
<reference key="30">
    <citation type="journal article" date="2024" name="Science">
        <title>Brain malformations and seizures by impaired chaperonin function of TRiC.</title>
        <authorList>
            <person name="Kraft F."/>
            <person name="Rodriguez-Aliaga P."/>
            <person name="Yuan W."/>
            <person name="Franken L."/>
            <person name="Zajt K."/>
            <person name="Hasan D."/>
            <person name="Lee T.T."/>
            <person name="Flex E."/>
            <person name="Hentschel A."/>
            <person name="Innes A.M."/>
            <person name="Zheng B."/>
            <person name="Julia Suh D.S."/>
            <person name="Knopp C."/>
            <person name="Lausberg E."/>
            <person name="Krause J."/>
            <person name="Zhang X."/>
            <person name="Trapane P."/>
            <person name="Carroll R."/>
            <person name="McClatchey M."/>
            <person name="Fry A.E."/>
            <person name="Wang L."/>
            <person name="Giesselmann S."/>
            <person name="Hoang H."/>
            <person name="Baldridge D."/>
            <person name="Silverman G.A."/>
            <person name="Radio F.C."/>
            <person name="Bertini E."/>
            <person name="Ciolfi A."/>
            <person name="Blood K.A."/>
            <person name="de Sainte Agathe J.M."/>
            <person name="Charles P."/>
            <person name="Bergant G."/>
            <person name="Cuturilo G."/>
            <person name="Peterlin B."/>
            <person name="Diderich K."/>
            <person name="Streff H."/>
            <person name="Robak L."/>
            <person name="Oegema R."/>
            <person name="van Binsbergen E."/>
            <person name="Herriges J."/>
            <person name="Saunders C.J."/>
            <person name="Maier A."/>
            <person name="Wolking S."/>
            <person name="Weber Y."/>
            <person name="Lochmueller H."/>
            <person name="Meyer S."/>
            <person name="Aleman A."/>
            <person name="Polavarapu K."/>
            <person name="Nicolas G."/>
            <person name="Goldenberg A."/>
            <person name="Guyant L."/>
            <person name="Pope K."/>
            <person name="Hehmeyer K.N."/>
            <person name="Monaghan K.G."/>
            <person name="Quade A."/>
            <person name="Smol T."/>
            <person name="Caumes R."/>
            <person name="Duerinckx S."/>
            <person name="Depondt C."/>
            <person name="Van Paesschen W."/>
            <person name="Rieubland C."/>
            <person name="Poloni C."/>
            <person name="Guipponi M."/>
            <person name="Arcioni S."/>
            <person name="Meuwissen M."/>
            <person name="Jansen A.C."/>
            <person name="Rosenblum J."/>
            <person name="Haack T.B."/>
            <person name="Bertrand M."/>
            <person name="Gerstner L."/>
            <person name="Magg J."/>
            <person name="Riess O."/>
            <person name="Schulz J.B."/>
            <person name="Wagner N."/>
            <person name="Wiesmann M."/>
            <person name="Weis J."/>
            <person name="Eggermann T."/>
            <person name="Begemann M."/>
            <person name="Roos A."/>
            <person name="Haeusler M."/>
            <person name="Schedl T."/>
            <person name="Tartaglia M."/>
            <person name="Bremer J."/>
            <person name="Pak S.C."/>
            <person name="Frydman J."/>
            <person name="Elbracht M."/>
            <person name="Kurth I."/>
        </authorList>
    </citation>
    <scope>VARIANT ARG-176</scope>
    <scope>INVOLVEMENT IN BRAIN DEVELOPMENTAL DISORDERS</scope>
    <scope>CHARACTERIZATION OF VARIANT ARG-176</scope>
</reference>
<name>TCPE_HUMAN</name>
<evidence type="ECO:0000250" key="1">
    <source>
        <dbReference type="UniProtKB" id="P80316"/>
    </source>
</evidence>
<evidence type="ECO:0000269" key="2">
    <source>
    </source>
</evidence>
<evidence type="ECO:0000269" key="3">
    <source>
    </source>
</evidence>
<evidence type="ECO:0000269" key="4">
    <source>
    </source>
</evidence>
<evidence type="ECO:0000269" key="5">
    <source>
    </source>
</evidence>
<evidence type="ECO:0000269" key="6">
    <source>
    </source>
</evidence>
<evidence type="ECO:0000269" key="7">
    <source>
    </source>
</evidence>
<evidence type="ECO:0000269" key="8">
    <source>
    </source>
</evidence>
<evidence type="ECO:0000269" key="9">
    <source>
    </source>
</evidence>
<evidence type="ECO:0000269" key="10">
    <source>
    </source>
</evidence>
<evidence type="ECO:0000269" key="11">
    <source>
    </source>
</evidence>
<evidence type="ECO:0000269" key="12">
    <source>
    </source>
</evidence>
<evidence type="ECO:0000269" key="13">
    <source>
    </source>
</evidence>
<evidence type="ECO:0000269" key="14">
    <source>
    </source>
</evidence>
<evidence type="ECO:0000269" key="15">
    <source ref="6"/>
</evidence>
<evidence type="ECO:0000269" key="16">
    <source ref="7"/>
</evidence>
<evidence type="ECO:0000303" key="17">
    <source>
    </source>
</evidence>
<evidence type="ECO:0000303" key="18">
    <source>
    </source>
</evidence>
<evidence type="ECO:0000305" key="19"/>
<evidence type="ECO:0007744" key="20">
    <source>
        <dbReference type="PDB" id="7NVL"/>
    </source>
</evidence>
<evidence type="ECO:0007744" key="21">
    <source>
        <dbReference type="PDB" id="7NVM"/>
    </source>
</evidence>
<evidence type="ECO:0007744" key="22">
    <source>
        <dbReference type="PDB" id="7NVN"/>
    </source>
</evidence>
<evidence type="ECO:0007744" key="23">
    <source>
        <dbReference type="PDB" id="7NVO"/>
    </source>
</evidence>
<evidence type="ECO:0007744" key="24">
    <source>
        <dbReference type="PDB" id="7TRG"/>
    </source>
</evidence>
<evidence type="ECO:0007744" key="25">
    <source>
        <dbReference type="PDB" id="7TTN"/>
    </source>
</evidence>
<evidence type="ECO:0007744" key="26">
    <source>
        <dbReference type="PDB" id="7TTT"/>
    </source>
</evidence>
<evidence type="ECO:0007744" key="27">
    <source>
        <dbReference type="PDB" id="7TUB"/>
    </source>
</evidence>
<evidence type="ECO:0007744" key="28">
    <source>
        <dbReference type="PDB" id="7WU7"/>
    </source>
</evidence>
<evidence type="ECO:0007744" key="29">
    <source>
        <dbReference type="PDB" id="7WZ3"/>
    </source>
</evidence>
<evidence type="ECO:0007744" key="30">
    <source>
        <dbReference type="PDB" id="7X0A"/>
    </source>
</evidence>
<evidence type="ECO:0007744" key="31">
    <source>
        <dbReference type="PDB" id="7X0S"/>
    </source>
</evidence>
<evidence type="ECO:0007744" key="32">
    <source>
        <dbReference type="PDB" id="7X0V"/>
    </source>
</evidence>
<evidence type="ECO:0007744" key="33">
    <source>
        <dbReference type="PDB" id="7X3J"/>
    </source>
</evidence>
<evidence type="ECO:0007744" key="34">
    <source>
        <dbReference type="PDB" id="7X3U"/>
    </source>
</evidence>
<evidence type="ECO:0007744" key="35">
    <source>
        <dbReference type="PDB" id="7X6Q"/>
    </source>
</evidence>
<evidence type="ECO:0007744" key="36">
    <source>
        <dbReference type="PDB" id="7X7Y"/>
    </source>
</evidence>
<evidence type="ECO:0007744" key="37">
    <source>
    </source>
</evidence>
<evidence type="ECO:0007744" key="38">
    <source>
    </source>
</evidence>
<evidence type="ECO:0007744" key="39">
    <source>
    </source>
</evidence>
<evidence type="ECO:0007744" key="40">
    <source>
    </source>
</evidence>
<evidence type="ECO:0007744" key="41">
    <source>
    </source>
</evidence>
<evidence type="ECO:0007744" key="42">
    <source>
    </source>
</evidence>
<evidence type="ECO:0007744" key="43">
    <source>
    </source>
</evidence>
<evidence type="ECO:0007829" key="44">
    <source>
        <dbReference type="PDB" id="7NVL"/>
    </source>
</evidence>
<evidence type="ECO:0007829" key="45">
    <source>
        <dbReference type="PDB" id="7NVM"/>
    </source>
</evidence>
<evidence type="ECO:0007829" key="46">
    <source>
        <dbReference type="PDB" id="7TTT"/>
    </source>
</evidence>
<evidence type="ECO:0007829" key="47">
    <source>
        <dbReference type="PDB" id="7X0A"/>
    </source>
</evidence>
<evidence type="ECO:0007829" key="48">
    <source>
        <dbReference type="PDB" id="7X0S"/>
    </source>
</evidence>
<evidence type="ECO:0007829" key="49">
    <source>
        <dbReference type="PDB" id="8I9U"/>
    </source>
</evidence>
<evidence type="ECO:0007829" key="50">
    <source>
        <dbReference type="PDB" id="8SFE"/>
    </source>
</evidence>
<evidence type="ECO:0007829" key="51">
    <source>
        <dbReference type="PDB" id="8SG9"/>
    </source>
</evidence>
<evidence type="ECO:0007829" key="52">
    <source>
        <dbReference type="PDB" id="8SHE"/>
    </source>
</evidence>
<sequence>MASMGTLAFDEYGRPFLIIKDQDRKSRLMGLEALKSHIMAAKAVANTMRTSLGPNGLDKMMVDKDGDVTVTNDGATILSMMDVDHQIAKLMVELSKSQDDEIGDGTTGVVVLAGALLEEAEQLLDRGIHPIRIADGYEQAARVAIEHLDKISDSVLVDIKDTEPLIQTAKTTLGSKVVNSCHRQMAEIAVNAVLTVADMERRDVDFELIKVEGKVGGRLEDTKLIKGVIVDKDFSHPQMPKKVEDAKIAILTCPFEPPKPKTKHKLDVTSVEDYKALQKYEKEKFEEMIQQIKETGANLAICQWGFDDEANHLLLQNNLPAVRWVGGPEIELIAIATGGRIVPRFSELTAEKLGFAGLVQEISFGTTKDKMLVIEQCKNSRAVTIFIRGGNKMIIEEAKRSLHDALCVIRNLIRDNRVVYGGGAAEISCALAVSQEADKCPTLEQYAMRAFADALEVIPMALSENSGMNPIQTMTEVRARQVKEMNPALGIDCLHKGTNDMKQQHVIETLIGKKQQISLATQMVRMILKIDDIRKPGESEE</sequence>
<organism>
    <name type="scientific">Homo sapiens</name>
    <name type="common">Human</name>
    <dbReference type="NCBI Taxonomy" id="9606"/>
    <lineage>
        <taxon>Eukaryota</taxon>
        <taxon>Metazoa</taxon>
        <taxon>Chordata</taxon>
        <taxon>Craniata</taxon>
        <taxon>Vertebrata</taxon>
        <taxon>Euteleostomi</taxon>
        <taxon>Mammalia</taxon>
        <taxon>Eutheria</taxon>
        <taxon>Euarchontoglires</taxon>
        <taxon>Primates</taxon>
        <taxon>Haplorrhini</taxon>
        <taxon>Catarrhini</taxon>
        <taxon>Hominidae</taxon>
        <taxon>Homo</taxon>
    </lineage>
</organism>